<organism>
    <name type="scientific">Homo sapiens</name>
    <name type="common">Human</name>
    <dbReference type="NCBI Taxonomy" id="9606"/>
    <lineage>
        <taxon>Eukaryota</taxon>
        <taxon>Metazoa</taxon>
        <taxon>Chordata</taxon>
        <taxon>Craniata</taxon>
        <taxon>Vertebrata</taxon>
        <taxon>Euteleostomi</taxon>
        <taxon>Mammalia</taxon>
        <taxon>Eutheria</taxon>
        <taxon>Euarchontoglires</taxon>
        <taxon>Primates</taxon>
        <taxon>Haplorrhini</taxon>
        <taxon>Catarrhini</taxon>
        <taxon>Hominidae</taxon>
        <taxon>Homo</taxon>
    </lineage>
</organism>
<keyword id="KW-0002">3D-structure</keyword>
<keyword id="KW-0007">Acetylation</keyword>
<keyword id="KW-0025">Alternative splicing</keyword>
<keyword id="KW-0898">Cataract</keyword>
<keyword id="KW-0963">Cytoplasm</keyword>
<keyword id="KW-0209">Deafness</keyword>
<keyword id="KW-0903">Direct protein sequencing</keyword>
<keyword id="KW-0225">Disease variant</keyword>
<keyword id="KW-1011">Dyskeratosis congenita</keyword>
<keyword id="KW-0413">Isomerase</keyword>
<keyword id="KW-1017">Isopeptide bond</keyword>
<keyword id="KW-0539">Nucleus</keyword>
<keyword id="KW-0597">Phosphoprotein</keyword>
<keyword id="KW-1267">Proteomics identification</keyword>
<keyword id="KW-1185">Reference proteome</keyword>
<keyword id="KW-0687">Ribonucleoprotein</keyword>
<keyword id="KW-0690">Ribosome biogenesis</keyword>
<keyword id="KW-0694">RNA-binding</keyword>
<keyword id="KW-0698">rRNA processing</keyword>
<keyword id="KW-0832">Ubl conjugation</keyword>
<evidence type="ECO:0000250" key="1">
    <source>
        <dbReference type="UniProtKB" id="P40615"/>
    </source>
</evidence>
<evidence type="ECO:0000250" key="2">
    <source>
        <dbReference type="UniProtKB" id="P60340"/>
    </source>
</evidence>
<evidence type="ECO:0000250" key="3">
    <source>
        <dbReference type="UniProtKB" id="Q9ESX5"/>
    </source>
</evidence>
<evidence type="ECO:0000255" key="4">
    <source>
        <dbReference type="PROSITE-ProRule" id="PRU00161"/>
    </source>
</evidence>
<evidence type="ECO:0000256" key="5">
    <source>
        <dbReference type="SAM" id="MobiDB-lite"/>
    </source>
</evidence>
<evidence type="ECO:0000269" key="6">
    <source>
    </source>
</evidence>
<evidence type="ECO:0000269" key="7">
    <source>
    </source>
</evidence>
<evidence type="ECO:0000269" key="8">
    <source>
    </source>
</evidence>
<evidence type="ECO:0000269" key="9">
    <source>
    </source>
</evidence>
<evidence type="ECO:0000269" key="10">
    <source>
    </source>
</evidence>
<evidence type="ECO:0000269" key="11">
    <source>
    </source>
</evidence>
<evidence type="ECO:0000269" key="12">
    <source>
    </source>
</evidence>
<evidence type="ECO:0000269" key="13">
    <source>
    </source>
</evidence>
<evidence type="ECO:0000269" key="14">
    <source>
    </source>
</evidence>
<evidence type="ECO:0000269" key="15">
    <source>
    </source>
</evidence>
<evidence type="ECO:0000269" key="16">
    <source>
    </source>
</evidence>
<evidence type="ECO:0000269" key="17">
    <source>
    </source>
</evidence>
<evidence type="ECO:0000269" key="18">
    <source>
    </source>
</evidence>
<evidence type="ECO:0000269" key="19">
    <source>
    </source>
</evidence>
<evidence type="ECO:0000269" key="20">
    <source>
    </source>
</evidence>
<evidence type="ECO:0000269" key="21">
    <source>
    </source>
</evidence>
<evidence type="ECO:0000269" key="22">
    <source>
    </source>
</evidence>
<evidence type="ECO:0000269" key="23">
    <source>
    </source>
</evidence>
<evidence type="ECO:0000269" key="24">
    <source>
    </source>
</evidence>
<evidence type="ECO:0000269" key="25">
    <source>
    </source>
</evidence>
<evidence type="ECO:0000269" key="26">
    <source>
    </source>
</evidence>
<evidence type="ECO:0000269" key="27">
    <source>
    </source>
</evidence>
<evidence type="ECO:0000269" key="28">
    <source>
    </source>
</evidence>
<evidence type="ECO:0000269" key="29">
    <source>
    </source>
</evidence>
<evidence type="ECO:0000269" key="30">
    <source>
    </source>
</evidence>
<evidence type="ECO:0000269" key="31">
    <source>
    </source>
</evidence>
<evidence type="ECO:0000269" key="32">
    <source>
    </source>
</evidence>
<evidence type="ECO:0000269" key="33">
    <source>
    </source>
</evidence>
<evidence type="ECO:0000269" key="34">
    <source ref="8"/>
</evidence>
<evidence type="ECO:0000303" key="35">
    <source>
    </source>
</evidence>
<evidence type="ECO:0000305" key="36"/>
<evidence type="ECO:0000305" key="37">
    <source>
    </source>
</evidence>
<evidence type="ECO:0000312" key="38">
    <source>
        <dbReference type="HGNC" id="HGNC:2890"/>
    </source>
</evidence>
<evidence type="ECO:0007744" key="39">
    <source>
    </source>
</evidence>
<evidence type="ECO:0007744" key="40">
    <source>
    </source>
</evidence>
<evidence type="ECO:0007744" key="41">
    <source>
    </source>
</evidence>
<evidence type="ECO:0007744" key="42">
    <source>
    </source>
</evidence>
<evidence type="ECO:0007744" key="43">
    <source>
    </source>
</evidence>
<evidence type="ECO:0007744" key="44">
    <source>
    </source>
</evidence>
<evidence type="ECO:0007744" key="45">
    <source>
    </source>
</evidence>
<evidence type="ECO:0007744" key="46">
    <source>
    </source>
</evidence>
<evidence type="ECO:0007744" key="47">
    <source>
    </source>
</evidence>
<evidence type="ECO:0007744" key="48">
    <source>
    </source>
</evidence>
<evidence type="ECO:0007744" key="49">
    <source>
    </source>
</evidence>
<evidence type="ECO:0007744" key="50">
    <source>
    </source>
</evidence>
<evidence type="ECO:0007744" key="51">
    <source>
    </source>
</evidence>
<evidence type="ECO:0007744" key="52">
    <source>
    </source>
</evidence>
<evidence type="ECO:0007744" key="53">
    <source>
    </source>
</evidence>
<evidence type="ECO:0007744" key="54">
    <source>
    </source>
</evidence>
<evidence type="ECO:0007744" key="55">
    <source>
    </source>
</evidence>
<evidence type="ECO:0007829" key="56">
    <source>
        <dbReference type="PDB" id="7BGB"/>
    </source>
</evidence>
<evidence type="ECO:0007829" key="57">
    <source>
        <dbReference type="PDB" id="7TRC"/>
    </source>
</evidence>
<gene>
    <name evidence="38" type="primary">DKC1</name>
    <name type="synonym">NOLA4</name>
</gene>
<proteinExistence type="evidence at protein level"/>
<comment type="function">
    <molecule>Isoform 1</molecule>
    <text evidence="20 30 32">Catalytic subunit of H/ACA small nucleolar ribonucleoprotein (H/ACA snoRNP) complex, which catalyzes pseudouridylation of rRNA (PubMed:25219674, PubMed:32554502). This involves the isomerization of uridine such that the ribose is subsequently attached to C5, instead of the normal N1 (PubMed:25219674). Each rRNA can contain up to 100 pseudouridine ('psi') residues, which may serve to stabilize the conformation of rRNAs. Required for ribosome biogenesis and telomere maintenance (PubMed:19179534, PubMed:25219674). Also required for correct processing or intranuclear trafficking of TERC, the RNA component of the telomerase reverse transcriptase (TERT) holoenzyme (PubMed:19179534).</text>
</comment>
<comment type="function">
    <molecule>Isoform 3</molecule>
    <text evidence="26">Promotes cell to cell and cell to substratum adhesion, increases the cell proliferation rate and leads to cytokeratin hyper-expression.</text>
</comment>
<comment type="catalytic activity">
    <reaction evidence="37">
        <text>uridine in 5S rRNA = pseudouridine in 5S rRNA</text>
        <dbReference type="Rhea" id="RHEA:47036"/>
        <dbReference type="Rhea" id="RHEA-COMP:11730"/>
        <dbReference type="Rhea" id="RHEA-COMP:11731"/>
        <dbReference type="ChEBI" id="CHEBI:65314"/>
        <dbReference type="ChEBI" id="CHEBI:65315"/>
    </reaction>
</comment>
<comment type="subunit">
    <text evidence="11 14 16 17 20 21 22 24 27 28 31">Part of the H/ACA small nucleolar ribonucleoprotein (H/ACA snoRNP) complex, which contains NHP2/NOLA2, GAR1/NOLA1, NOP10/NOLA3, and DKC1/NOLA4, which is presumed to be the catalytic subunit (PubMed:15044956). The complex contains a stable core formed by binding of one or two NOP10-DKC1 heterodimers to NHP2; GAR1 subsequently binds to this core via DKC1 (PubMed:15044956). The complex binds a box H/ACA small nucleolar RNA (snoRNA), which may target the specific site of modification within the RNA substrate (PubMed:15044956). During assembly, the complex contains NAF1 instead of GAR1/NOLA1 (PubMed:16601202, PubMed:16618814). The complex also interacts with TERC, which contains a 3'-terminal domain related to the box H/ACA snoRNAs. Specific interactions with snoRNAs or TERC are mediated by GAR1 and NHP2. Associates with NOLC1/NOPP140 (PubMed:15044956). H/ACA snoRNPs interact with the SMN complex, consisting of SMN1 or SMN2, GEMIN2/SIP1, DDX20/GEMIN3, and GEMIN4. This is mediated by interaction between GAR1 and SMN1 or SMN2. The SMN complex may be required for correct assembly of the H/ACA snoRNP complex (PubMed:15044956). Component of the telomerase holoenzyme complex composed of one molecule of TERT, one molecule of WRAP53/TCAB1, two molecules of H/ACA ribonucleoprotein complex subunits DKC1, NOP10, NHP2 and GAR1, and a telomerase RNA template component (TERC) (PubMed:11074001, PubMed:19179534, PubMed:20351177, PubMed:29695869). The telomerase holoenzyme complex is associated with TEP1, SMG6/EST1A and POT1 (PubMed:19179534). Interacts with SHQ1; this interaction may lead to the stabilization of DKC1, from the time of its synthesis until its association with NOP10, NHP2, and NAF1 at the nascent H/ACA RNA (PubMed:19383767, PubMed:19734544). Interacts with HMBOX1 (PubMed:23685356). Interacts with DHX36 (PubMed:21846770).</text>
</comment>
<comment type="interaction">
    <interactant intactId="EBI-713091">
        <id>O60832</id>
    </interactant>
    <interactant intactId="EBI-2549423">
        <id>Q6NT76</id>
        <label>HMBOX1</label>
    </interactant>
    <organismsDiffer>false</organismsDiffer>
    <experiments>2</experiments>
</comment>
<comment type="interaction">
    <interactant intactId="EBI-713091">
        <id>O60832</id>
    </interactant>
    <interactant intactId="EBI-2515597">
        <id>Q96HR8</id>
        <label>NAF1</label>
    </interactant>
    <organismsDiffer>false</organismsDiffer>
    <experiments>12</experiments>
</comment>
<comment type="interaction">
    <interactant intactId="EBI-713091">
        <id>O60832</id>
    </interactant>
    <interactant intactId="EBI-353675">
        <id>Q9Y265</id>
        <label>RUVBL1</label>
    </interactant>
    <organismsDiffer>false</organismsDiffer>
    <experiments>10</experiments>
</comment>
<comment type="interaction">
    <interactant intactId="EBI-713091">
        <id>O60832</id>
    </interactant>
    <interactant intactId="EBI-2515568">
        <id>Q6PI26</id>
        <label>SHQ1</label>
    </interactant>
    <organismsDiffer>false</organismsDiffer>
    <experiments>5</experiments>
</comment>
<comment type="subcellular location">
    <molecule>Isoform 1</molecule>
    <subcellularLocation>
        <location evidence="7 9 12">Nucleus</location>
        <location evidence="7 9 12">Nucleolus</location>
    </subcellularLocation>
    <subcellularLocation>
        <location evidence="1">Nucleus</location>
        <location evidence="1">Cajal body</location>
    </subcellularLocation>
</comment>
<comment type="subcellular location">
    <molecule>Isoform 3</molecule>
    <subcellularLocation>
        <location evidence="26">Cytoplasm</location>
    </subcellularLocation>
</comment>
<comment type="alternative products">
    <event type="alternative splicing"/>
    <isoform>
        <id>O60832-1</id>
        <name>1</name>
        <sequence type="displayed"/>
    </isoform>
    <isoform>
        <id>O60832-2</id>
        <name>3</name>
        <sequence type="described" ref="VSP_042422"/>
    </isoform>
</comment>
<comment type="tissue specificity">
    <text evidence="10">Ubiquitously expressed.</text>
</comment>
<comment type="disease" evidence="6 15 18 19 22 23 25 30 33">
    <disease id="DI-00409">
        <name>Dyskeratosis congenita, X-linked</name>
        <acronym>DKCX</acronym>
        <description>A rare, progressive bone marrow failure syndrome characterized by the triad of reticulated skin hyperpigmentation, nail dystrophy, and mucosal leukoplakia. Early mortality is often associated with bone marrow failure, infections, fatal pulmonary complications, or malignancy.</description>
        <dbReference type="MIM" id="305000"/>
    </disease>
    <text evidence="30">The disease is caused by variants affecting the gene represented in this entry. Reduced rRNA pseudouridine levels in cells from patients (PubMed:25219674).</text>
</comment>
<comment type="disease" evidence="8 13 22 29">
    <disease id="DI-00572">
        <name>Hoyeraal-Hreidarsson syndrome</name>
        <acronym>HHS</acronym>
        <description>A clinically severe variant of dyskeratosis congenita that is characterized by multisystem involvement, early onset in utero, and often results in death in childhood. Affected individuals show intrauterine growth retardation, microcephaly, cerebellar hypoplasia, delayed development, and bone marrow failure resulting in immunodeficiency.</description>
        <dbReference type="MIM" id="305000"/>
    </disease>
    <text>The disease is caused by variants affecting the gene represented in this entry.</text>
</comment>
<comment type="disease" evidence="32">
    <disease id="DI-06695">
        <name>Cataracts, hearing impairment, nephrotic syndrome, and enterocolitis 1</name>
        <acronym>CHINE1</acronym>
        <description>An X-linked dominant disorder characterized by infantile onset of steroid-resistant nephrotic syndrome, cataracts, sensorineural deafness, and enterocolitis. Males are more severely affected than females, and death occurs in early childhood. Affected females develop early-onset hearing impairment, early-onset cataracts, but only rarely have nephrotic syndrome. They do not have enterocolitis.</description>
        <dbReference type="MIM" id="301108"/>
    </disease>
    <text>The disease may be caused by variants affecting the gene represented in this entry.</text>
</comment>
<comment type="similarity">
    <text evidence="36">Belongs to the pseudouridine synthase TruB family.</text>
</comment>
<comment type="online information" name="DKC1base">
    <link uri="https://databases.lovd.nl/shared/genes/DKC1"/>
    <text>DKC1 mutation db</text>
</comment>
<comment type="online information" name="Atlas of Genetics and Cytogenetics in Oncology and Haematology">
    <link uri="https://atlasgeneticsoncology.org/gene/157/DKC1"/>
</comment>
<dbReference type="EC" id="5.4.99.-" evidence="37"/>
<dbReference type="EMBL" id="AJ224481">
    <property type="protein sequence ID" value="CAA11970.1"/>
    <property type="molecule type" value="Genomic_DNA"/>
</dbReference>
<dbReference type="EMBL" id="AJ010395">
    <property type="protein sequence ID" value="CAB51168.1"/>
    <property type="molecule type" value="Genomic_DNA"/>
</dbReference>
<dbReference type="EMBL" id="AJ010396">
    <property type="protein sequence ID" value="CAB51168.1"/>
    <property type="status" value="JOINED"/>
    <property type="molecule type" value="Genomic_DNA"/>
</dbReference>
<dbReference type="EMBL" id="AF067008">
    <property type="protein sequence ID" value="AAD11815.1"/>
    <property type="molecule type" value="mRNA"/>
</dbReference>
<dbReference type="EMBL" id="AF067023">
    <property type="protein sequence ID" value="AAD20232.1"/>
    <property type="molecule type" value="Genomic_DNA"/>
</dbReference>
<dbReference type="EMBL" id="AF067009">
    <property type="protein sequence ID" value="AAD20232.1"/>
    <property type="status" value="JOINED"/>
    <property type="molecule type" value="Genomic_DNA"/>
</dbReference>
<dbReference type="EMBL" id="AF067010">
    <property type="protein sequence ID" value="AAD20232.1"/>
    <property type="status" value="JOINED"/>
    <property type="molecule type" value="Genomic_DNA"/>
</dbReference>
<dbReference type="EMBL" id="AF067011">
    <property type="protein sequence ID" value="AAD20232.1"/>
    <property type="status" value="JOINED"/>
    <property type="molecule type" value="Genomic_DNA"/>
</dbReference>
<dbReference type="EMBL" id="AF067012">
    <property type="protein sequence ID" value="AAD20232.1"/>
    <property type="status" value="JOINED"/>
    <property type="molecule type" value="Genomic_DNA"/>
</dbReference>
<dbReference type="EMBL" id="AF067013">
    <property type="protein sequence ID" value="AAD20232.1"/>
    <property type="status" value="JOINED"/>
    <property type="molecule type" value="Genomic_DNA"/>
</dbReference>
<dbReference type="EMBL" id="AF067014">
    <property type="protein sequence ID" value="AAD20232.1"/>
    <property type="status" value="JOINED"/>
    <property type="molecule type" value="Genomic_DNA"/>
</dbReference>
<dbReference type="EMBL" id="AF067015">
    <property type="protein sequence ID" value="AAD20232.1"/>
    <property type="status" value="JOINED"/>
    <property type="molecule type" value="Genomic_DNA"/>
</dbReference>
<dbReference type="EMBL" id="AF067016">
    <property type="protein sequence ID" value="AAD20232.1"/>
    <property type="status" value="JOINED"/>
    <property type="molecule type" value="Genomic_DNA"/>
</dbReference>
<dbReference type="EMBL" id="AF067017">
    <property type="protein sequence ID" value="AAD20232.1"/>
    <property type="status" value="JOINED"/>
    <property type="molecule type" value="Genomic_DNA"/>
</dbReference>
<dbReference type="EMBL" id="AF067018">
    <property type="protein sequence ID" value="AAD20232.1"/>
    <property type="status" value="JOINED"/>
    <property type="molecule type" value="Genomic_DNA"/>
</dbReference>
<dbReference type="EMBL" id="AF067019">
    <property type="protein sequence ID" value="AAD20232.1"/>
    <property type="status" value="JOINED"/>
    <property type="molecule type" value="Genomic_DNA"/>
</dbReference>
<dbReference type="EMBL" id="AF067020">
    <property type="protein sequence ID" value="AAD20232.1"/>
    <property type="status" value="JOINED"/>
    <property type="molecule type" value="Genomic_DNA"/>
</dbReference>
<dbReference type="EMBL" id="AF067021">
    <property type="protein sequence ID" value="AAD20232.1"/>
    <property type="status" value="JOINED"/>
    <property type="molecule type" value="Genomic_DNA"/>
</dbReference>
<dbReference type="EMBL" id="AF067022">
    <property type="protein sequence ID" value="AAD20232.1"/>
    <property type="status" value="JOINED"/>
    <property type="molecule type" value="Genomic_DNA"/>
</dbReference>
<dbReference type="EMBL" id="U59151">
    <property type="protein sequence ID" value="AAB94299.1"/>
    <property type="molecule type" value="mRNA"/>
</dbReference>
<dbReference type="EMBL" id="JF279874">
    <property type="protein sequence ID" value="ADX66370.1"/>
    <property type="molecule type" value="mRNA"/>
</dbReference>
<dbReference type="EMBL" id="AC109993">
    <property type="status" value="NOT_ANNOTATED_CDS"/>
    <property type="molecule type" value="Genomic_DNA"/>
</dbReference>
<dbReference type="EMBL" id="BC009928">
    <property type="protein sequence ID" value="AAH09928.1"/>
    <property type="molecule type" value="mRNA"/>
</dbReference>
<dbReference type="EMBL" id="BC010015">
    <property type="protein sequence ID" value="AAH10015.1"/>
    <property type="molecule type" value="mRNA"/>
</dbReference>
<dbReference type="CCDS" id="CCDS14761.1">
    <molecule id="O60832-1"/>
</dbReference>
<dbReference type="RefSeq" id="NP_001135935.1">
    <property type="nucleotide sequence ID" value="NM_001142463.2"/>
</dbReference>
<dbReference type="RefSeq" id="NP_001275676.1">
    <molecule id="O60832-2"/>
    <property type="nucleotide sequence ID" value="NM_001288747.2"/>
</dbReference>
<dbReference type="RefSeq" id="NP_001354.1">
    <molecule id="O60832-1"/>
    <property type="nucleotide sequence ID" value="NM_001363.5"/>
</dbReference>
<dbReference type="PDB" id="7BGB">
    <property type="method" value="EM"/>
    <property type="resolution" value="3.39 A"/>
    <property type="chains" value="C/G=1-514"/>
</dbReference>
<dbReference type="PDB" id="7TRC">
    <property type="method" value="EM"/>
    <property type="resolution" value="3.30 A"/>
    <property type="chains" value="C/G=1-514"/>
</dbReference>
<dbReference type="PDB" id="7V9A">
    <property type="method" value="EM"/>
    <property type="resolution" value="3.94 A"/>
    <property type="chains" value="C/G=1-514"/>
</dbReference>
<dbReference type="PDB" id="8OUE">
    <property type="method" value="EM"/>
    <property type="resolution" value="2.70 A"/>
    <property type="chains" value="C/G=1-514"/>
</dbReference>
<dbReference type="PDB" id="8OUF">
    <property type="method" value="EM"/>
    <property type="resolution" value="3.10 A"/>
    <property type="chains" value="C/G=1-514"/>
</dbReference>
<dbReference type="PDBsum" id="7BGB"/>
<dbReference type="PDBsum" id="7TRC"/>
<dbReference type="PDBsum" id="7V9A"/>
<dbReference type="PDBsum" id="8OUE"/>
<dbReference type="PDBsum" id="8OUF"/>
<dbReference type="EMDB" id="EMD-12177"/>
<dbReference type="EMDB" id="EMD-17190"/>
<dbReference type="EMDB" id="EMD-17191"/>
<dbReference type="EMDB" id="EMD-26085"/>
<dbReference type="EMDB" id="EMD-31813"/>
<dbReference type="EMDB" id="EMD-31814"/>
<dbReference type="SMR" id="O60832"/>
<dbReference type="BioGRID" id="108080">
    <property type="interactions" value="410"/>
</dbReference>
<dbReference type="ComplexPortal" id="CPX-265">
    <property type="entry name" value="Telomerase holoenzyme complex"/>
</dbReference>
<dbReference type="CORUM" id="O60832"/>
<dbReference type="DIP" id="DIP-40645N"/>
<dbReference type="FunCoup" id="O60832">
    <property type="interactions" value="3410"/>
</dbReference>
<dbReference type="IntAct" id="O60832">
    <property type="interactions" value="227"/>
</dbReference>
<dbReference type="MINT" id="O60832"/>
<dbReference type="STRING" id="9606.ENSP00000358563"/>
<dbReference type="GlyGen" id="O60832">
    <property type="glycosylation" value="2 sites, 1 O-linked glycan (1 site)"/>
</dbReference>
<dbReference type="iPTMnet" id="O60832"/>
<dbReference type="MetOSite" id="O60832"/>
<dbReference type="PhosphoSitePlus" id="O60832"/>
<dbReference type="SwissPalm" id="O60832"/>
<dbReference type="BioMuta" id="DKC1"/>
<dbReference type="jPOST" id="O60832"/>
<dbReference type="MassIVE" id="O60832"/>
<dbReference type="PaxDb" id="9606-ENSP00000358563"/>
<dbReference type="PeptideAtlas" id="O60832"/>
<dbReference type="ProteomicsDB" id="49624">
    <molecule id="O60832-1"/>
</dbReference>
<dbReference type="ProteomicsDB" id="49625">
    <molecule id="O60832-2"/>
</dbReference>
<dbReference type="Pumba" id="O60832"/>
<dbReference type="Antibodypedia" id="418">
    <property type="antibodies" value="418 antibodies from 38 providers"/>
</dbReference>
<dbReference type="DNASU" id="1736"/>
<dbReference type="Ensembl" id="ENST00000369550.10">
    <molecule id="O60832-1"/>
    <property type="protein sequence ID" value="ENSP00000358563.5"/>
    <property type="gene ID" value="ENSG00000130826.19"/>
</dbReference>
<dbReference type="GeneID" id="1736"/>
<dbReference type="KEGG" id="hsa:1736"/>
<dbReference type="MANE-Select" id="ENST00000369550.10">
    <property type="protein sequence ID" value="ENSP00000358563.5"/>
    <property type="RefSeq nucleotide sequence ID" value="NM_001363.5"/>
    <property type="RefSeq protein sequence ID" value="NP_001354.1"/>
</dbReference>
<dbReference type="UCSC" id="uc004fmm.5">
    <molecule id="O60832-1"/>
    <property type="organism name" value="human"/>
</dbReference>
<dbReference type="AGR" id="HGNC:2890"/>
<dbReference type="CTD" id="1736"/>
<dbReference type="DisGeNET" id="1736"/>
<dbReference type="GeneCards" id="DKC1"/>
<dbReference type="GeneReviews" id="DKC1"/>
<dbReference type="HGNC" id="HGNC:2890">
    <property type="gene designation" value="DKC1"/>
</dbReference>
<dbReference type="HPA" id="ENSG00000130826">
    <property type="expression patterns" value="Low tissue specificity"/>
</dbReference>
<dbReference type="MalaCards" id="DKC1"/>
<dbReference type="MIM" id="300126">
    <property type="type" value="gene"/>
</dbReference>
<dbReference type="MIM" id="301108">
    <property type="type" value="phenotype"/>
</dbReference>
<dbReference type="MIM" id="305000">
    <property type="type" value="phenotype"/>
</dbReference>
<dbReference type="neXtProt" id="NX_O60832"/>
<dbReference type="OpenTargets" id="ENSG00000130826"/>
<dbReference type="Orphanet" id="1775">
    <property type="disease" value="Dyskeratosis congenita"/>
</dbReference>
<dbReference type="Orphanet" id="3322">
    <property type="disease" value="Hoyeraal-Hreidarsson syndrome"/>
</dbReference>
<dbReference type="PharmGKB" id="PA27344"/>
<dbReference type="VEuPathDB" id="HostDB:ENSG00000130826"/>
<dbReference type="eggNOG" id="KOG2529">
    <property type="taxonomic scope" value="Eukaryota"/>
</dbReference>
<dbReference type="GeneTree" id="ENSGT00510000047092"/>
<dbReference type="HOGENOM" id="CLU_032087_3_2_1"/>
<dbReference type="InParanoid" id="O60832"/>
<dbReference type="OMA" id="KYGRTNE"/>
<dbReference type="OrthoDB" id="10250002at2759"/>
<dbReference type="PAN-GO" id="O60832">
    <property type="GO annotations" value="6 GO annotations based on evolutionary models"/>
</dbReference>
<dbReference type="PhylomeDB" id="O60832"/>
<dbReference type="TreeFam" id="TF300354"/>
<dbReference type="PathwayCommons" id="O60832"/>
<dbReference type="Reactome" id="R-HSA-171319">
    <property type="pathway name" value="Telomere Extension By Telomerase"/>
</dbReference>
<dbReference type="Reactome" id="R-HSA-6790901">
    <property type="pathway name" value="rRNA modification in the nucleus and cytosol"/>
</dbReference>
<dbReference type="SignaLink" id="O60832"/>
<dbReference type="SIGNOR" id="O60832"/>
<dbReference type="BioGRID-ORCS" id="1736">
    <property type="hits" value="421 hits in 785 CRISPR screens"/>
</dbReference>
<dbReference type="CD-CODE" id="6F24707C">
    <property type="entry name" value="Cajal body"/>
</dbReference>
<dbReference type="CD-CODE" id="91857CE7">
    <property type="entry name" value="Nucleolus"/>
</dbReference>
<dbReference type="CD-CODE" id="DEE660B4">
    <property type="entry name" value="Stress granule"/>
</dbReference>
<dbReference type="ChiTaRS" id="DKC1">
    <property type="organism name" value="human"/>
</dbReference>
<dbReference type="GeneWiki" id="Dyskerin"/>
<dbReference type="GenomeRNAi" id="1736"/>
<dbReference type="Pharos" id="O60832">
    <property type="development level" value="Tbio"/>
</dbReference>
<dbReference type="PRO" id="PR:O60832"/>
<dbReference type="Proteomes" id="UP000005640">
    <property type="component" value="Chromosome X"/>
</dbReference>
<dbReference type="RNAct" id="O60832">
    <property type="molecule type" value="protein"/>
</dbReference>
<dbReference type="Bgee" id="ENSG00000130826">
    <property type="expression patterns" value="Expressed in secondary oocyte and 208 other cell types or tissues"/>
</dbReference>
<dbReference type="ExpressionAtlas" id="O60832">
    <property type="expression patterns" value="baseline and differential"/>
</dbReference>
<dbReference type="GO" id="GO:0072589">
    <property type="term" value="C:box H/ACA scaRNP complex"/>
    <property type="evidence" value="ECO:0000304"/>
    <property type="project" value="BHF-UCL"/>
</dbReference>
<dbReference type="GO" id="GO:0031429">
    <property type="term" value="C:box H/ACA snoRNP complex"/>
    <property type="evidence" value="ECO:0000314"/>
    <property type="project" value="BHF-UCL"/>
</dbReference>
<dbReference type="GO" id="GO:0090661">
    <property type="term" value="C:box H/ACA telomerase RNP complex"/>
    <property type="evidence" value="ECO:0000314"/>
    <property type="project" value="BHF-UCL"/>
</dbReference>
<dbReference type="GO" id="GO:0005737">
    <property type="term" value="C:cytoplasm"/>
    <property type="evidence" value="ECO:0007669"/>
    <property type="project" value="UniProtKB-SubCell"/>
</dbReference>
<dbReference type="GO" id="GO:0001650">
    <property type="term" value="C:fibrillar center"/>
    <property type="evidence" value="ECO:0000314"/>
    <property type="project" value="HPA"/>
</dbReference>
<dbReference type="GO" id="GO:0005730">
    <property type="term" value="C:nucleolus"/>
    <property type="evidence" value="ECO:0000304"/>
    <property type="project" value="ProtInc"/>
</dbReference>
<dbReference type="GO" id="GO:0005654">
    <property type="term" value="C:nucleoplasm"/>
    <property type="evidence" value="ECO:0000314"/>
    <property type="project" value="HPA"/>
</dbReference>
<dbReference type="GO" id="GO:0005634">
    <property type="term" value="C:nucleus"/>
    <property type="evidence" value="ECO:0000314"/>
    <property type="project" value="LIFEdb"/>
</dbReference>
<dbReference type="GO" id="GO:0005697">
    <property type="term" value="C:telomerase holoenzyme complex"/>
    <property type="evidence" value="ECO:0000314"/>
    <property type="project" value="UniProtKB"/>
</dbReference>
<dbReference type="GO" id="GO:0034513">
    <property type="term" value="F:box H/ACA snoRNA binding"/>
    <property type="evidence" value="ECO:0000353"/>
    <property type="project" value="BHF-UCL"/>
</dbReference>
<dbReference type="GO" id="GO:0009982">
    <property type="term" value="F:pseudouridine synthase activity"/>
    <property type="evidence" value="ECO:0000315"/>
    <property type="project" value="UniProtKB"/>
</dbReference>
<dbReference type="GO" id="GO:0003723">
    <property type="term" value="F:RNA binding"/>
    <property type="evidence" value="ECO:0000353"/>
    <property type="project" value="BHF-UCL"/>
</dbReference>
<dbReference type="GO" id="GO:0003720">
    <property type="term" value="F:telomerase activity"/>
    <property type="evidence" value="ECO:0000314"/>
    <property type="project" value="UniProtKB"/>
</dbReference>
<dbReference type="GO" id="GO:0070034">
    <property type="term" value="F:telomerase RNA binding"/>
    <property type="evidence" value="ECO:0000353"/>
    <property type="project" value="BHF-UCL"/>
</dbReference>
<dbReference type="GO" id="GO:0000495">
    <property type="term" value="P:box H/ACA sno(s)RNA 3'-end processing"/>
    <property type="evidence" value="ECO:0000318"/>
    <property type="project" value="GO_Central"/>
</dbReference>
<dbReference type="GO" id="GO:0000455">
    <property type="term" value="P:enzyme-directed rRNA pseudouridine synthesis"/>
    <property type="evidence" value="ECO:0000315"/>
    <property type="project" value="UniProtKB"/>
</dbReference>
<dbReference type="GO" id="GO:1990481">
    <property type="term" value="P:mRNA pseudouridine synthesis"/>
    <property type="evidence" value="ECO:0000318"/>
    <property type="project" value="GO_Central"/>
</dbReference>
<dbReference type="GO" id="GO:1904874">
    <property type="term" value="P:positive regulation of telomerase RNA localization to Cajal body"/>
    <property type="evidence" value="ECO:0000315"/>
    <property type="project" value="BHF-UCL"/>
</dbReference>
<dbReference type="GO" id="GO:0032212">
    <property type="term" value="P:positive regulation of telomere maintenance via telomerase"/>
    <property type="evidence" value="ECO:0000314"/>
    <property type="project" value="BHF-UCL"/>
</dbReference>
<dbReference type="GO" id="GO:1904867">
    <property type="term" value="P:protein localization to Cajal body"/>
    <property type="evidence" value="ECO:0007001"/>
    <property type="project" value="BHF-UCL"/>
</dbReference>
<dbReference type="GO" id="GO:1904872">
    <property type="term" value="P:regulation of telomerase RNA localization to Cajal body"/>
    <property type="evidence" value="ECO:0000315"/>
    <property type="project" value="BHF-UCL"/>
</dbReference>
<dbReference type="GO" id="GO:0006396">
    <property type="term" value="P:RNA processing"/>
    <property type="evidence" value="ECO:0000304"/>
    <property type="project" value="ProtInc"/>
</dbReference>
<dbReference type="GO" id="GO:0006364">
    <property type="term" value="P:rRNA processing"/>
    <property type="evidence" value="ECO:0000304"/>
    <property type="project" value="ProtInc"/>
</dbReference>
<dbReference type="GO" id="GO:0031118">
    <property type="term" value="P:rRNA pseudouridine synthesis"/>
    <property type="evidence" value="ECO:0000318"/>
    <property type="project" value="GO_Central"/>
</dbReference>
<dbReference type="GO" id="GO:0090666">
    <property type="term" value="P:scaRNA localization to Cajal body"/>
    <property type="evidence" value="ECO:0000315"/>
    <property type="project" value="BHF-UCL"/>
</dbReference>
<dbReference type="GO" id="GO:0031120">
    <property type="term" value="P:snRNA pseudouridine synthesis"/>
    <property type="evidence" value="ECO:0000318"/>
    <property type="project" value="GO_Central"/>
</dbReference>
<dbReference type="GO" id="GO:1905323">
    <property type="term" value="P:telomerase holoenzyme complex assembly"/>
    <property type="evidence" value="ECO:0007669"/>
    <property type="project" value="Ensembl"/>
</dbReference>
<dbReference type="GO" id="GO:0090669">
    <property type="term" value="P:telomerase RNA stabilization"/>
    <property type="evidence" value="ECO:0000315"/>
    <property type="project" value="BHF-UCL"/>
</dbReference>
<dbReference type="GO" id="GO:0007004">
    <property type="term" value="P:telomere maintenance via telomerase"/>
    <property type="evidence" value="ECO:0000314"/>
    <property type="project" value="UniProtKB"/>
</dbReference>
<dbReference type="CDD" id="cd02572">
    <property type="entry name" value="PseudoU_synth_hDyskerin"/>
    <property type="match status" value="1"/>
</dbReference>
<dbReference type="CDD" id="cd21148">
    <property type="entry name" value="PUA_Cbf5"/>
    <property type="match status" value="1"/>
</dbReference>
<dbReference type="FunFam" id="3.30.2350.10:FF:000001">
    <property type="entry name" value="H/ACA ribonucleoprotein complex subunit CBF5"/>
    <property type="match status" value="1"/>
</dbReference>
<dbReference type="Gene3D" id="3.30.2350.10">
    <property type="entry name" value="Pseudouridine synthase"/>
    <property type="match status" value="1"/>
</dbReference>
<dbReference type="Gene3D" id="2.30.130.10">
    <property type="entry name" value="PUA domain"/>
    <property type="match status" value="1"/>
</dbReference>
<dbReference type="InterPro" id="IPR012960">
    <property type="entry name" value="Dyskerin-like"/>
</dbReference>
<dbReference type="InterPro" id="IPR020103">
    <property type="entry name" value="PsdUridine_synth_cat_dom_sf"/>
</dbReference>
<dbReference type="InterPro" id="IPR002501">
    <property type="entry name" value="PsdUridine_synth_N"/>
</dbReference>
<dbReference type="InterPro" id="IPR002478">
    <property type="entry name" value="PUA"/>
</dbReference>
<dbReference type="InterPro" id="IPR015947">
    <property type="entry name" value="PUA-like_sf"/>
</dbReference>
<dbReference type="InterPro" id="IPR036974">
    <property type="entry name" value="PUA_sf"/>
</dbReference>
<dbReference type="InterPro" id="IPR004802">
    <property type="entry name" value="tRNA_PsdUridine_synth_B_fam"/>
</dbReference>
<dbReference type="InterPro" id="IPR032819">
    <property type="entry name" value="TruB_C"/>
</dbReference>
<dbReference type="InterPro" id="IPR004521">
    <property type="entry name" value="Uncharacterised_CHP00451"/>
</dbReference>
<dbReference type="NCBIfam" id="TIGR00425">
    <property type="entry name" value="CBF5"/>
    <property type="match status" value="1"/>
</dbReference>
<dbReference type="NCBIfam" id="NF003280">
    <property type="entry name" value="PRK04270.1"/>
    <property type="match status" value="1"/>
</dbReference>
<dbReference type="NCBIfam" id="TIGR00451">
    <property type="entry name" value="unchar_dom_2"/>
    <property type="match status" value="1"/>
</dbReference>
<dbReference type="PANTHER" id="PTHR23127">
    <property type="entry name" value="CENTROMERE/MICROTUBULE BINDING PROTEIN CBF5"/>
    <property type="match status" value="1"/>
</dbReference>
<dbReference type="PANTHER" id="PTHR23127:SF0">
    <property type="entry name" value="H_ACA RIBONUCLEOPROTEIN COMPLEX SUBUNIT DKC1"/>
    <property type="match status" value="1"/>
</dbReference>
<dbReference type="Pfam" id="PF08068">
    <property type="entry name" value="DKCLD"/>
    <property type="match status" value="1"/>
</dbReference>
<dbReference type="Pfam" id="PF01472">
    <property type="entry name" value="PUA"/>
    <property type="match status" value="1"/>
</dbReference>
<dbReference type="Pfam" id="PF16198">
    <property type="entry name" value="TruB_C_2"/>
    <property type="match status" value="1"/>
</dbReference>
<dbReference type="Pfam" id="PF01509">
    <property type="entry name" value="TruB_N"/>
    <property type="match status" value="1"/>
</dbReference>
<dbReference type="SMART" id="SM01136">
    <property type="entry name" value="DKCLD"/>
    <property type="match status" value="1"/>
</dbReference>
<dbReference type="SMART" id="SM00359">
    <property type="entry name" value="PUA"/>
    <property type="match status" value="1"/>
</dbReference>
<dbReference type="SUPFAM" id="SSF55120">
    <property type="entry name" value="Pseudouridine synthase"/>
    <property type="match status" value="1"/>
</dbReference>
<dbReference type="SUPFAM" id="SSF88697">
    <property type="entry name" value="PUA domain-like"/>
    <property type="match status" value="1"/>
</dbReference>
<dbReference type="PROSITE" id="PS50890">
    <property type="entry name" value="PUA"/>
    <property type="match status" value="1"/>
</dbReference>
<feature type="initiator methionine" description="Removed" evidence="34 44 48">
    <location>
        <position position="1"/>
    </location>
</feature>
<feature type="chain" id="PRO_0000121983" description="H/ACA ribonucleoprotein complex subunit DKC1">
    <location>
        <begin position="2"/>
        <end position="514"/>
    </location>
</feature>
<feature type="domain" description="PUA" evidence="4">
    <location>
        <begin position="296"/>
        <end position="371"/>
    </location>
</feature>
<feature type="region of interest" description="Nucleolar localization">
    <location>
        <begin position="2"/>
        <end position="21"/>
    </location>
</feature>
<feature type="region of interest" description="Disordered" evidence="5">
    <location>
        <begin position="443"/>
        <end position="514"/>
    </location>
</feature>
<feature type="region of interest" description="Nuclear and nucleolar localization">
    <location>
        <begin position="446"/>
        <end position="514"/>
    </location>
</feature>
<feature type="compositionally biased region" description="Basic residues" evidence="5">
    <location>
        <begin position="468"/>
        <end position="480"/>
    </location>
</feature>
<feature type="active site" description="Nucleophile" evidence="2">
    <location>
        <position position="125"/>
    </location>
</feature>
<feature type="modified residue" description="N-acetylalanine" evidence="34 44 48">
    <location>
        <position position="2"/>
    </location>
</feature>
<feature type="modified residue" description="Phosphoserine" evidence="40 41 42 45 46 47">
    <location>
        <position position="21"/>
    </location>
</feature>
<feature type="modified residue" description="Phosphoserine" evidence="49">
    <location>
        <position position="387"/>
    </location>
</feature>
<feature type="modified residue" description="Phosphoserine" evidence="46 47 49">
    <location>
        <position position="451"/>
    </location>
</feature>
<feature type="modified residue" description="Phosphoserine" evidence="46 47 49">
    <location>
        <position position="453"/>
    </location>
</feature>
<feature type="modified residue" description="Phosphoserine" evidence="47">
    <location>
        <position position="455"/>
    </location>
</feature>
<feature type="modified residue" description="Phosphothreonine" evidence="3">
    <location>
        <position position="458"/>
    </location>
</feature>
<feature type="modified residue" description="Phosphoserine" evidence="41 45 46 47 49">
    <location>
        <position position="485"/>
    </location>
</feature>
<feature type="modified residue" description="Phosphoserine" evidence="39 41 45 46 47 49 50">
    <location>
        <position position="494"/>
    </location>
</feature>
<feature type="modified residue" description="Phosphoserine" evidence="40 43 46 47 49">
    <location>
        <position position="513"/>
    </location>
</feature>
<feature type="cross-link" description="Glycyl lysine isopeptide (Lys-Gly) (interchain with G-Cter in SUMO2)" evidence="55">
    <location>
        <position position="20"/>
    </location>
</feature>
<feature type="cross-link" description="Glycyl lysine isopeptide (Lys-Gly) (interchain with G-Cter in SUMO2)" evidence="55">
    <location>
        <position position="39"/>
    </location>
</feature>
<feature type="cross-link" description="Glycyl lysine isopeptide (Lys-Gly) (interchain with G-Cter in SUMO2)" evidence="55">
    <location>
        <position position="43"/>
    </location>
</feature>
<feature type="cross-link" description="Glycyl lysine isopeptide (Lys-Gly) (interchain with G-Cter in SUMO2)" evidence="55">
    <location>
        <position position="191"/>
    </location>
</feature>
<feature type="cross-link" description="Glycyl lysine isopeptide (Lys-Gly) (interchain with G-Cter in SUMO2)" evidence="55">
    <location>
        <position position="394"/>
    </location>
</feature>
<feature type="cross-link" description="Glycyl lysine isopeptide (Lys-Gly) (interchain with G-Cter in SUMO1); alternate" evidence="51">
    <location>
        <position position="413"/>
    </location>
</feature>
<feature type="cross-link" description="Glycyl lysine isopeptide (Lys-Gly) (interchain with G-Cter in SUMO2); alternate" evidence="52 53 54 55">
    <location>
        <position position="413"/>
    </location>
</feature>
<feature type="cross-link" description="Glycyl lysine isopeptide (Lys-Gly) (interchain with G-Cter in SUMO2)" evidence="55">
    <location>
        <position position="424"/>
    </location>
</feature>
<feature type="cross-link" description="Glycyl lysine isopeptide (Lys-Gly) (interchain with G-Cter in SUMO2)" evidence="55">
    <location>
        <position position="433"/>
    </location>
</feature>
<feature type="cross-link" description="Glycyl lysine isopeptide (Lys-Gly) (interchain with G-Cter in SUMO2)" evidence="55">
    <location>
        <position position="467"/>
    </location>
</feature>
<feature type="splice variant" id="VSP_042422" description="In isoform 3." evidence="35">
    <original>SESAKKEVVAEVVKAPQVVAEAAKTAKRKRESESESDETPPAAPQLIKKEKKKSKKDKKAKAGLESGAEPGDGDSDTTKKKKKKKKAKEVELVSE</original>
    <variation>R</variation>
    <location>
        <begin position="420"/>
        <end position="514"/>
    </location>
</feature>
<feature type="sequence variant" id="VAR_010076" description="In DKCX; dbSNP:rs121912303." evidence="6">
    <original>A</original>
    <variation>V</variation>
    <location>
        <position position="2"/>
    </location>
</feature>
<feature type="sequence variant" id="VAR_006811" description="In DKCX; dbSNP:rs121912293." evidence="33">
    <original>F</original>
    <variation>V</variation>
    <location>
        <position position="36"/>
    </location>
</feature>
<feature type="sequence variant" id="VAR_006812" description="In DKCX; results in mislocalization of the telomerase complex without affecting telomerase activity; dbSNP:rs137854489." evidence="25 33">
    <location>
        <position position="37"/>
    </location>
</feature>
<feature type="sequence variant" id="VAR_015674" description="In HHS; dbSNP:rs28936072." evidence="13">
    <original>I</original>
    <variation>T</variation>
    <location>
        <position position="38"/>
    </location>
</feature>
<feature type="sequence variant" id="VAR_010077" description="In DKCX; dbSNP:rs121912296." evidence="6">
    <original>K</original>
    <variation>E</variation>
    <location>
        <position position="39"/>
    </location>
</feature>
<feature type="sequence variant" id="VAR_006813" description="In DKCX; dbSNP:rs121912292." evidence="33">
    <original>P</original>
    <variation>R</variation>
    <location>
        <position position="40"/>
    </location>
</feature>
<feature type="sequence variant" id="VAR_010078" description="In DKCX; dbSNP:rs121912302." evidence="6">
    <original>E</original>
    <variation>K</variation>
    <location>
        <position position="41"/>
    </location>
</feature>
<feature type="sequence variant" id="VAR_015675" description="In HHS; increases interaction with SHQ1; dbSNP:rs121912304." evidence="8 22 29">
    <original>T</original>
    <variation>M</variation>
    <location>
        <position position="49"/>
    </location>
</feature>
<feature type="sequence variant" id="VAR_080707" description="In DKCX; results in mislocalization of the telomerase complex without affecting telomerase activity." evidence="25">
    <original>L</original>
    <variation>V</variation>
    <location>
        <position position="54"/>
    </location>
</feature>
<feature type="sequence variant" id="VAR_063821" description="In DKCX; due to a 2 nucleotide inversion; dbSNP:rs121912287." evidence="19">
    <original>L</original>
    <variation>S</variation>
    <location>
        <position position="56"/>
    </location>
</feature>
<feature type="sequence variant" id="VAR_010079" description="In DKCX; dbSNP:rs121912301." evidence="6">
    <original>R</original>
    <variation>T</variation>
    <location>
        <position position="65"/>
    </location>
</feature>
<feature type="sequence variant" id="VAR_010080" description="In DKCX; decreases interaction with SHQ1; dbSNP:rs121912297." evidence="6 22">
    <original>T</original>
    <variation>A</variation>
    <location>
        <position position="66"/>
    </location>
</feature>
<feature type="sequence variant" id="VAR_063822" description="In DKCX; dbSNP:rs121912306." evidence="18">
    <original>L</original>
    <variation>F</variation>
    <location>
        <position position="72"/>
    </location>
</feature>
<feature type="sequence variant" id="VAR_006814" description="In DKCX; requires 2 nucleotide substitutions; dbSNP:rs121912294." evidence="33">
    <original>L</original>
    <variation>Y</variation>
    <location>
        <position position="72"/>
    </location>
</feature>
<feature type="sequence variant" id="VAR_015676" description="In HHS; no effect on interaction with SHQ1; dbSNP:rs121912305." evidence="8 22">
    <original>S</original>
    <variation>G</variation>
    <location>
        <position position="121"/>
    </location>
</feature>
<feature type="sequence variant" id="VAR_088623" description="In CHINE1; likely pathogenic; decreased rRNA pseudouridine synthesis in peripheral blood cells from a severely affected female; unable to fully rescue developmental defects in dkc1-null zebrafish morphants; does not affect interaction with NOP10." evidence="32">
    <original>E</original>
    <variation>K</variation>
    <location>
        <position position="206"/>
    </location>
</feature>
<feature type="sequence variant" id="VAR_022553" description="In dbSNP:rs2728533.">
    <original>G</original>
    <variation>D</variation>
    <location>
        <position position="223"/>
    </location>
</feature>
<feature type="sequence variant" id="VAR_063823" description="In DKCX; dbSNP:rs121912290." evidence="23">
    <original>L</original>
    <variation>F</variation>
    <location>
        <position position="317"/>
    </location>
</feature>
<feature type="sequence variant" id="VAR_010081" description="In DKCX; dbSNP:rs2728726." evidence="6">
    <original>L</original>
    <variation>V</variation>
    <location>
        <position position="321"/>
    </location>
</feature>
<feature type="sequence variant" id="VAR_063824" description="In DKCX; dbSNP:rs121912291." evidence="23">
    <original>R</original>
    <variation>Q</variation>
    <location>
        <position position="322"/>
    </location>
</feature>
<feature type="sequence variant" id="VAR_010082" description="In DKCX; increases interaction with SHQ1; dbSNP:rs121912298." evidence="6 22">
    <original>M</original>
    <variation>I</variation>
    <location>
        <position position="350"/>
    </location>
</feature>
<feature type="sequence variant" id="VAR_010083" description="In DKCX; decreases interaction with SHQ1; dbSNP:rs121912300." evidence="6 22">
    <original>M</original>
    <variation>T</variation>
    <location>
        <position position="350"/>
    </location>
</feature>
<feature type="sequence variant" id="VAR_009264" description="In DKCX and HHS; increases interaction with SHQ1; dbSNP:rs121912288." evidence="6 15 22">
    <original>A</original>
    <variation>V</variation>
    <location>
        <position position="353"/>
    </location>
</feature>
<feature type="sequence variant" id="VAR_006815" description="In DKCX; dbSNP:rs121912295." evidence="33">
    <original>G</original>
    <variation>E</variation>
    <location>
        <position position="402"/>
    </location>
</feature>
<feature type="sequence variant" id="VAR_010084" description="In DKCX; dbSNP:rs121912299." evidence="6">
    <original>G</original>
    <variation>R</variation>
    <location>
        <position position="402"/>
    </location>
</feature>
<feature type="sequence variant" id="VAR_063825" description="In DKCX; dbSNP:rs121912289." evidence="15">
    <original>P</original>
    <variation>L</variation>
    <location>
        <position position="409"/>
    </location>
</feature>
<feature type="mutagenesis site" description="Increases interaction with SHQ1." evidence="22">
    <original>A</original>
    <variation>R</variation>
    <location>
        <position position="353"/>
    </location>
</feature>
<feature type="sequence conflict" description="In Ref. 4; AAB94299." evidence="36" ref="4">
    <original>L</original>
    <variation>F</variation>
    <location>
        <position position="37"/>
    </location>
</feature>
<feature type="sequence conflict" description="In Ref. 7; AAH09928." evidence="36" ref="7">
    <original>V</original>
    <variation>F</variation>
    <location>
        <position position="285"/>
    </location>
</feature>
<feature type="sequence conflict" description="In Ref. 2; CAB51168." evidence="36" ref="2">
    <original>K</original>
    <variation>KVSGMLSSVWN</variation>
    <location>
        <position position="446"/>
    </location>
</feature>
<feature type="helix" evidence="57">
    <location>
        <begin position="49"/>
        <end position="51"/>
    </location>
</feature>
<feature type="turn" evidence="57">
    <location>
        <begin position="57"/>
        <end position="60"/>
    </location>
</feature>
<feature type="strand" evidence="57">
    <location>
        <begin position="61"/>
        <end position="64"/>
    </location>
</feature>
<feature type="helix" evidence="57">
    <location>
        <begin position="83"/>
        <end position="88"/>
    </location>
</feature>
<feature type="strand" evidence="57">
    <location>
        <begin position="89"/>
        <end position="96"/>
    </location>
</feature>
<feature type="strand" evidence="57">
    <location>
        <begin position="98"/>
        <end position="100"/>
    </location>
</feature>
<feature type="helix" evidence="57">
    <location>
        <begin position="102"/>
        <end position="113"/>
    </location>
</feature>
<feature type="strand" evidence="57">
    <location>
        <begin position="118"/>
        <end position="122"/>
    </location>
</feature>
<feature type="strand" evidence="57">
    <location>
        <begin position="129"/>
        <end position="136"/>
    </location>
</feature>
<feature type="helix" evidence="57">
    <location>
        <begin position="137"/>
        <end position="143"/>
    </location>
</feature>
<feature type="helix" evidence="57">
    <location>
        <begin position="144"/>
        <end position="147"/>
    </location>
</feature>
<feature type="strand" evidence="57">
    <location>
        <begin position="152"/>
        <end position="158"/>
    </location>
</feature>
<feature type="helix" evidence="57">
    <location>
        <begin position="166"/>
        <end position="174"/>
    </location>
</feature>
<feature type="strand" evidence="57">
    <location>
        <begin position="178"/>
        <end position="182"/>
    </location>
</feature>
<feature type="strand" evidence="57">
    <location>
        <begin position="195"/>
        <end position="208"/>
    </location>
</feature>
<feature type="turn" evidence="57">
    <location>
        <begin position="209"/>
        <end position="212"/>
    </location>
</feature>
<feature type="strand" evidence="57">
    <location>
        <begin position="213"/>
        <end position="220"/>
    </location>
</feature>
<feature type="helix" evidence="57">
    <location>
        <begin position="226"/>
        <end position="237"/>
    </location>
</feature>
<feature type="strand" evidence="57">
    <location>
        <begin position="242"/>
        <end position="248"/>
    </location>
</feature>
<feature type="strand" evidence="57">
    <location>
        <begin position="254"/>
        <end position="259"/>
    </location>
</feature>
<feature type="helix" evidence="57">
    <location>
        <begin position="263"/>
        <end position="276"/>
    </location>
</feature>
<feature type="helix" evidence="57">
    <location>
        <begin position="282"/>
        <end position="284"/>
    </location>
</feature>
<feature type="helix" evidence="57">
    <location>
        <begin position="289"/>
        <end position="292"/>
    </location>
</feature>
<feature type="strand" evidence="57">
    <location>
        <begin position="299"/>
        <end position="301"/>
    </location>
</feature>
<feature type="helix" evidence="57">
    <location>
        <begin position="303"/>
        <end position="311"/>
    </location>
</feature>
<feature type="turn" evidence="57">
    <location>
        <begin position="317"/>
        <end position="319"/>
    </location>
</feature>
<feature type="strand" evidence="57">
    <location>
        <begin position="320"/>
        <end position="323"/>
    </location>
</feature>
<feature type="strand" evidence="57">
    <location>
        <begin position="332"/>
        <end position="336"/>
    </location>
</feature>
<feature type="strand" evidence="56">
    <location>
        <begin position="338"/>
        <end position="340"/>
    </location>
</feature>
<feature type="strand" evidence="57">
    <location>
        <begin position="342"/>
        <end position="348"/>
    </location>
</feature>
<feature type="turn" evidence="57">
    <location>
        <begin position="352"/>
        <end position="357"/>
    </location>
</feature>
<feature type="strand" evidence="57">
    <location>
        <begin position="360"/>
        <end position="369"/>
    </location>
</feature>
<feature type="strand" evidence="57">
    <location>
        <begin position="373"/>
        <end position="376"/>
    </location>
</feature>
<feature type="strand" evidence="57">
    <location>
        <begin position="383"/>
        <end position="387"/>
    </location>
</feature>
<feature type="helix" evidence="57">
    <location>
        <begin position="388"/>
        <end position="391"/>
    </location>
</feature>
<protein>
    <recommendedName>
        <fullName>H/ACA ribonucleoprotein complex subunit DKC1</fullName>
        <ecNumber evidence="37">5.4.99.-</ecNumber>
    </recommendedName>
    <alternativeName>
        <fullName>CBF5 homolog</fullName>
    </alternativeName>
    <alternativeName>
        <fullName>Dyskerin</fullName>
    </alternativeName>
    <alternativeName>
        <fullName>Nopp140-associated protein of 57 kDa</fullName>
    </alternativeName>
    <alternativeName>
        <fullName>Nucleolar protein NAP57</fullName>
    </alternativeName>
    <alternativeName>
        <fullName>Nucleolar protein family A member 4</fullName>
    </alternativeName>
    <alternativeName>
        <fullName>snoRNP protein DKC1</fullName>
    </alternativeName>
</protein>
<sequence>MADAEVIILPKKHKKKKERKSLPEEDVAEIQHAEEFLIKPESKVAKLDTSQWPLLLKNFDKLNVRTTHYTPLACGSNPLKREIGDYIRTGFINLDKPSNPSSHEVVAWIRRILRVEKTGHSGTLDPKVTGCLIVCIERATRLVKSQQSAGKEYVGIVRLHNAIEGGTQLSRALETLTGALFQRPPLIAAVKRQLRVRTIYESKMIEYDPERRLGIFWVSCEAGTYIRTLCVHLGLLLGVGGQMQELRRVRSGVMSEKDHMVTMHDVLDAQWLYDNHKDESYLRRVVYPLEKLLTSHKRLVMKDSAVNAICYGAKIMLPGVLRYEDGIEVNQEIVVITTKGEAICMAIALMTTAVISTCDHGIVAKIKRVIMERDTYPRKWGLGPKASQKKLMIKQGLLDKHGKPTDSTPATWKQEYVDYSESAKKEVVAEVVKAPQVVAEAAKTAKRKRESESESDETPPAAPQLIKKEKKKSKKDKKAKAGLESGAEPGDGDSDTTKKKKKKKKAKEVELVSE</sequence>
<name>DKC1_HUMAN</name>
<accession>O60832</accession>
<accession>F5BSB3</accession>
<accession>O43845</accession>
<accession>Q96G67</accession>
<accession>Q9Y505</accession>
<reference key="1">
    <citation type="journal article" date="1998" name="Nat. Genet.">
        <title>X-linked dyskeratosis congenita is caused by mutations in a highly conserved gene with putative nucleolar functions.</title>
        <authorList>
            <person name="Heiss N.S."/>
            <person name="Knight S.W."/>
            <person name="Vulliamy T.J."/>
            <person name="Klauck S.M."/>
            <person name="Wiemann S."/>
            <person name="Mason P.J."/>
            <person name="Poustka A."/>
            <person name="Dokal I."/>
        </authorList>
    </citation>
    <scope>NUCLEOTIDE SEQUENCE [MRNA] (ISOFORM 1)</scope>
    <scope>INVOLVEMENT IN DKCX</scope>
    <scope>VARIANTS DKCX VAL-36; LEU-37 DEL; ARG-40; TYR-72 AND GLU-402</scope>
</reference>
<reference key="2">
    <citation type="journal article" date="1999" name="Am. J. Hum. Genet.">
        <title>X-linked dyskeratosis congenita is predominantly caused by missense mutations in the DKC1 gene.</title>
        <authorList>
            <person name="Knight S.W."/>
            <person name="Heiss N.S."/>
            <person name="Vulliamy T.J."/>
            <person name="Greschner S."/>
            <person name="Stavrides G."/>
            <person name="Pai G.S."/>
            <person name="Lestringant G."/>
            <person name="Varma N."/>
            <person name="Mason P.J."/>
            <person name="Dokal I."/>
            <person name="Poustka A."/>
        </authorList>
    </citation>
    <scope>NUCLEOTIDE SEQUENCE [MRNA] (ISOFORM 1)</scope>
    <scope>VARIANTS DKCX VAL-2; GLU-39; LYS-41; THR-65; ALA-66; VAL-321; ILE-350; THR-350; VAL-353 AND ARG-402</scope>
</reference>
<reference key="3">
    <citation type="journal article" date="1999" name="Genomics">
        <title>Mapping and characterization of the X-linked dyskeratosis congenita (DKC) gene.</title>
        <authorList>
            <person name="Hassock S."/>
            <person name="Vetrie D."/>
            <person name="Giannelli F."/>
        </authorList>
    </citation>
    <scope>NUCLEOTIDE SEQUENCE [GENOMIC DNA / MRNA] (ISOFORM 1)</scope>
</reference>
<reference key="4">
    <citation type="submission" date="1996-05" db="EMBL/GenBank/DDBJ databases">
        <title>A highly conserved nucleolar protein from human interacts with a HMG-like protein.</title>
        <authorList>
            <person name="Jiang W."/>
            <person name="Clifford J."/>
            <person name="Koltin Y."/>
        </authorList>
    </citation>
    <scope>NUCLEOTIDE SEQUENCE [MRNA] (ISOFORM 1)</scope>
</reference>
<reference key="5">
    <citation type="journal article" date="2011" name="Biochim. Biophys. Acta">
        <title>A new human dyskerin isoform with cytoplasmic localization.</title>
        <authorList>
            <person name="Angrisani A."/>
            <person name="Turano M."/>
            <person name="Paparo L."/>
            <person name="Di Mauro C."/>
            <person name="Furia M."/>
        </authorList>
    </citation>
    <scope>NUCLEOTIDE SEQUENCE [MRNA] (ISOFORM 3)</scope>
    <scope>SUBCELLULAR LOCATION (ISOFORM 3)</scope>
    <scope>FUNCTION (ISOFORM 3)</scope>
</reference>
<reference key="6">
    <citation type="journal article" date="2005" name="Nature">
        <title>The DNA sequence of the human X chromosome.</title>
        <authorList>
            <person name="Ross M.T."/>
            <person name="Grafham D.V."/>
            <person name="Coffey A.J."/>
            <person name="Scherer S."/>
            <person name="McLay K."/>
            <person name="Muzny D."/>
            <person name="Platzer M."/>
            <person name="Howell G.R."/>
            <person name="Burrows C."/>
            <person name="Bird C.P."/>
            <person name="Frankish A."/>
            <person name="Lovell F.L."/>
            <person name="Howe K.L."/>
            <person name="Ashurst J.L."/>
            <person name="Fulton R.S."/>
            <person name="Sudbrak R."/>
            <person name="Wen G."/>
            <person name="Jones M.C."/>
            <person name="Hurles M.E."/>
            <person name="Andrews T.D."/>
            <person name="Scott C.E."/>
            <person name="Searle S."/>
            <person name="Ramser J."/>
            <person name="Whittaker A."/>
            <person name="Deadman R."/>
            <person name="Carter N.P."/>
            <person name="Hunt S.E."/>
            <person name="Chen R."/>
            <person name="Cree A."/>
            <person name="Gunaratne P."/>
            <person name="Havlak P."/>
            <person name="Hodgson A."/>
            <person name="Metzker M.L."/>
            <person name="Richards S."/>
            <person name="Scott G."/>
            <person name="Steffen D."/>
            <person name="Sodergren E."/>
            <person name="Wheeler D.A."/>
            <person name="Worley K.C."/>
            <person name="Ainscough R."/>
            <person name="Ambrose K.D."/>
            <person name="Ansari-Lari M.A."/>
            <person name="Aradhya S."/>
            <person name="Ashwell R.I."/>
            <person name="Babbage A.K."/>
            <person name="Bagguley C.L."/>
            <person name="Ballabio A."/>
            <person name="Banerjee R."/>
            <person name="Barker G.E."/>
            <person name="Barlow K.F."/>
            <person name="Barrett I.P."/>
            <person name="Bates K.N."/>
            <person name="Beare D.M."/>
            <person name="Beasley H."/>
            <person name="Beasley O."/>
            <person name="Beck A."/>
            <person name="Bethel G."/>
            <person name="Blechschmidt K."/>
            <person name="Brady N."/>
            <person name="Bray-Allen S."/>
            <person name="Bridgeman A.M."/>
            <person name="Brown A.J."/>
            <person name="Brown M.J."/>
            <person name="Bonnin D."/>
            <person name="Bruford E.A."/>
            <person name="Buhay C."/>
            <person name="Burch P."/>
            <person name="Burford D."/>
            <person name="Burgess J."/>
            <person name="Burrill W."/>
            <person name="Burton J."/>
            <person name="Bye J.M."/>
            <person name="Carder C."/>
            <person name="Carrel L."/>
            <person name="Chako J."/>
            <person name="Chapman J.C."/>
            <person name="Chavez D."/>
            <person name="Chen E."/>
            <person name="Chen G."/>
            <person name="Chen Y."/>
            <person name="Chen Z."/>
            <person name="Chinault C."/>
            <person name="Ciccodicola A."/>
            <person name="Clark S.Y."/>
            <person name="Clarke G."/>
            <person name="Clee C.M."/>
            <person name="Clegg S."/>
            <person name="Clerc-Blankenburg K."/>
            <person name="Clifford K."/>
            <person name="Cobley V."/>
            <person name="Cole C.G."/>
            <person name="Conquer J.S."/>
            <person name="Corby N."/>
            <person name="Connor R.E."/>
            <person name="David R."/>
            <person name="Davies J."/>
            <person name="Davis C."/>
            <person name="Davis J."/>
            <person name="Delgado O."/>
            <person name="Deshazo D."/>
            <person name="Dhami P."/>
            <person name="Ding Y."/>
            <person name="Dinh H."/>
            <person name="Dodsworth S."/>
            <person name="Draper H."/>
            <person name="Dugan-Rocha S."/>
            <person name="Dunham A."/>
            <person name="Dunn M."/>
            <person name="Durbin K.J."/>
            <person name="Dutta I."/>
            <person name="Eades T."/>
            <person name="Ellwood M."/>
            <person name="Emery-Cohen A."/>
            <person name="Errington H."/>
            <person name="Evans K.L."/>
            <person name="Faulkner L."/>
            <person name="Francis F."/>
            <person name="Frankland J."/>
            <person name="Fraser A.E."/>
            <person name="Galgoczy P."/>
            <person name="Gilbert J."/>
            <person name="Gill R."/>
            <person name="Gloeckner G."/>
            <person name="Gregory S.G."/>
            <person name="Gribble S."/>
            <person name="Griffiths C."/>
            <person name="Grocock R."/>
            <person name="Gu Y."/>
            <person name="Gwilliam R."/>
            <person name="Hamilton C."/>
            <person name="Hart E.A."/>
            <person name="Hawes A."/>
            <person name="Heath P.D."/>
            <person name="Heitmann K."/>
            <person name="Hennig S."/>
            <person name="Hernandez J."/>
            <person name="Hinzmann B."/>
            <person name="Ho S."/>
            <person name="Hoffs M."/>
            <person name="Howden P.J."/>
            <person name="Huckle E.J."/>
            <person name="Hume J."/>
            <person name="Hunt P.J."/>
            <person name="Hunt A.R."/>
            <person name="Isherwood J."/>
            <person name="Jacob L."/>
            <person name="Johnson D."/>
            <person name="Jones S."/>
            <person name="de Jong P.J."/>
            <person name="Joseph S.S."/>
            <person name="Keenan S."/>
            <person name="Kelly S."/>
            <person name="Kershaw J.K."/>
            <person name="Khan Z."/>
            <person name="Kioschis P."/>
            <person name="Klages S."/>
            <person name="Knights A.J."/>
            <person name="Kosiura A."/>
            <person name="Kovar-Smith C."/>
            <person name="Laird G.K."/>
            <person name="Langford C."/>
            <person name="Lawlor S."/>
            <person name="Leversha M."/>
            <person name="Lewis L."/>
            <person name="Liu W."/>
            <person name="Lloyd C."/>
            <person name="Lloyd D.M."/>
            <person name="Loulseged H."/>
            <person name="Loveland J.E."/>
            <person name="Lovell J.D."/>
            <person name="Lozado R."/>
            <person name="Lu J."/>
            <person name="Lyne R."/>
            <person name="Ma J."/>
            <person name="Maheshwari M."/>
            <person name="Matthews L.H."/>
            <person name="McDowall J."/>
            <person name="McLaren S."/>
            <person name="McMurray A."/>
            <person name="Meidl P."/>
            <person name="Meitinger T."/>
            <person name="Milne S."/>
            <person name="Miner G."/>
            <person name="Mistry S.L."/>
            <person name="Morgan M."/>
            <person name="Morris S."/>
            <person name="Mueller I."/>
            <person name="Mullikin J.C."/>
            <person name="Nguyen N."/>
            <person name="Nordsiek G."/>
            <person name="Nyakatura G."/>
            <person name="O'dell C.N."/>
            <person name="Okwuonu G."/>
            <person name="Palmer S."/>
            <person name="Pandian R."/>
            <person name="Parker D."/>
            <person name="Parrish J."/>
            <person name="Pasternak S."/>
            <person name="Patel D."/>
            <person name="Pearce A.V."/>
            <person name="Pearson D.M."/>
            <person name="Pelan S.E."/>
            <person name="Perez L."/>
            <person name="Porter K.M."/>
            <person name="Ramsey Y."/>
            <person name="Reichwald K."/>
            <person name="Rhodes S."/>
            <person name="Ridler K.A."/>
            <person name="Schlessinger D."/>
            <person name="Schueler M.G."/>
            <person name="Sehra H.K."/>
            <person name="Shaw-Smith C."/>
            <person name="Shen H."/>
            <person name="Sheridan E.M."/>
            <person name="Shownkeen R."/>
            <person name="Skuce C.D."/>
            <person name="Smith M.L."/>
            <person name="Sotheran E.C."/>
            <person name="Steingruber H.E."/>
            <person name="Steward C.A."/>
            <person name="Storey R."/>
            <person name="Swann R.M."/>
            <person name="Swarbreck D."/>
            <person name="Tabor P.E."/>
            <person name="Taudien S."/>
            <person name="Taylor T."/>
            <person name="Teague B."/>
            <person name="Thomas K."/>
            <person name="Thorpe A."/>
            <person name="Timms K."/>
            <person name="Tracey A."/>
            <person name="Trevanion S."/>
            <person name="Tromans A.C."/>
            <person name="d'Urso M."/>
            <person name="Verduzco D."/>
            <person name="Villasana D."/>
            <person name="Waldron L."/>
            <person name="Wall M."/>
            <person name="Wang Q."/>
            <person name="Warren J."/>
            <person name="Warry G.L."/>
            <person name="Wei X."/>
            <person name="West A."/>
            <person name="Whitehead S.L."/>
            <person name="Whiteley M.N."/>
            <person name="Wilkinson J.E."/>
            <person name="Willey D.L."/>
            <person name="Williams G."/>
            <person name="Williams L."/>
            <person name="Williamson A."/>
            <person name="Williamson H."/>
            <person name="Wilming L."/>
            <person name="Woodmansey R.L."/>
            <person name="Wray P.W."/>
            <person name="Yen J."/>
            <person name="Zhang J."/>
            <person name="Zhou J."/>
            <person name="Zoghbi H."/>
            <person name="Zorilla S."/>
            <person name="Buck D."/>
            <person name="Reinhardt R."/>
            <person name="Poustka A."/>
            <person name="Rosenthal A."/>
            <person name="Lehrach H."/>
            <person name="Meindl A."/>
            <person name="Minx P.J."/>
            <person name="Hillier L.W."/>
            <person name="Willard H.F."/>
            <person name="Wilson R.K."/>
            <person name="Waterston R.H."/>
            <person name="Rice C.M."/>
            <person name="Vaudin M."/>
            <person name="Coulson A."/>
            <person name="Nelson D.L."/>
            <person name="Weinstock G."/>
            <person name="Sulston J.E."/>
            <person name="Durbin R.M."/>
            <person name="Hubbard T."/>
            <person name="Gibbs R.A."/>
            <person name="Beck S."/>
            <person name="Rogers J."/>
            <person name="Bentley D.R."/>
        </authorList>
    </citation>
    <scope>NUCLEOTIDE SEQUENCE [LARGE SCALE GENOMIC DNA]</scope>
</reference>
<reference key="7">
    <citation type="journal article" date="2004" name="Genome Res.">
        <title>The status, quality, and expansion of the NIH full-length cDNA project: the Mammalian Gene Collection (MGC).</title>
        <authorList>
            <consortium name="The MGC Project Team"/>
        </authorList>
    </citation>
    <scope>NUCLEOTIDE SEQUENCE [LARGE SCALE MRNA] (ISOFORM 1)</scope>
    <source>
        <tissue>Uterus</tissue>
    </source>
</reference>
<reference key="8">
    <citation type="submission" date="2004-10" db="UniProtKB">
        <authorList>
            <person name="Bienvenut W.V."/>
        </authorList>
    </citation>
    <scope>PROTEIN SEQUENCE OF 2-11; 118-127; 159-191; 284-291; 303-322 AND 426-443</scope>
    <scope>CLEAVAGE OF INITIATOR METHIONINE</scope>
    <scope>ACETYLATION AT ALA-2</scope>
    <scope>IDENTIFICATION BY MASS SPECTROMETRY</scope>
    <source>
        <tissue>Cervix carcinoma</tissue>
    </source>
</reference>
<reference key="9">
    <citation type="journal article" date="1999" name="Hum. Mol. Genet.">
        <title>Dyskerin localizes to the nucleolus and its mislocalization is unlikely to play a role in the pathogenesis of dyskeratosis congenita.</title>
        <authorList>
            <person name="Heiss N.S."/>
            <person name="Girod A."/>
            <person name="Salowsky R."/>
            <person name="Wiemann S."/>
            <person name="Pepperkok R."/>
            <person name="Poustka A."/>
        </authorList>
    </citation>
    <scope>SUBCELLULAR LOCATION</scope>
    <scope>DOMAIN NUCLEOLAR LOCALIZATION</scope>
</reference>
<reference key="10">
    <citation type="journal article" date="1999" name="Nature">
        <title>A telomerase component is defective in the human disease dyskeratosis congenita.</title>
        <authorList>
            <person name="Mitchell J.R."/>
            <person name="Wood E."/>
            <person name="Collins K."/>
        </authorList>
    </citation>
    <scope>SUBCELLULAR LOCATION</scope>
    <scope>ASSOCIATION WITH TELOMERASE</scope>
</reference>
<reference key="11">
    <citation type="journal article" date="2000" name="Genomics">
        <title>Gene structure and expression of the mouse dyskeratosis congenita gene, dkc1.</title>
        <authorList>
            <person name="Heiss N.S."/>
            <person name="Baechner D."/>
            <person name="Salowsky R."/>
            <person name="Kolb A."/>
            <person name="Kioschis P."/>
            <person name="Poustka A."/>
        </authorList>
    </citation>
    <scope>TISSUE SPECIFICITY</scope>
</reference>
<reference key="12">
    <citation type="journal article" date="2000" name="Mol. Cell. Biol.">
        <title>Human H/ACA small nucleolar RNPs and telomerase share evolutionarily conserved proteins NHP2 and NOP10.</title>
        <authorList>
            <person name="Pogacic V."/>
            <person name="Dragon F."/>
            <person name="Filipowicz W."/>
        </authorList>
    </citation>
    <scope>INTERACTION WITH NHP2</scope>
</reference>
<reference key="13">
    <citation type="journal article" date="2002" name="Mol. Biol. Cell">
        <title>Functional proteomic analysis of human nucleolus.</title>
        <authorList>
            <person name="Scherl A."/>
            <person name="Coute Y."/>
            <person name="Deon C."/>
            <person name="Calle A."/>
            <person name="Kindbeiter K."/>
            <person name="Sanchez J.-C."/>
            <person name="Greco A."/>
            <person name="Hochstrasser D.F."/>
            <person name="Diaz J.-J."/>
        </authorList>
    </citation>
    <scope>SUBCELLULAR LOCATION [LARGE SCALE ANALYSIS]</scope>
    <source>
        <tissue>Cervix carcinoma</tissue>
    </source>
</reference>
<reference key="14">
    <citation type="journal article" date="2004" name="EMBO J.">
        <title>Architecture and assembly of mammalian H/ACA small nucleolar and telomerase ribonucleoproteins.</title>
        <authorList>
            <person name="Wang C."/>
            <person name="Meier U.T."/>
        </authorList>
    </citation>
    <scope>CHARACTERIZATION OF THE H/ACA SNORNP COMPLEX</scope>
</reference>
<reference key="15">
    <citation type="journal article" date="2006" name="Cell">
        <title>Global, in vivo, and site-specific phosphorylation dynamics in signaling networks.</title>
        <authorList>
            <person name="Olsen J.V."/>
            <person name="Blagoev B."/>
            <person name="Gnad F."/>
            <person name="Macek B."/>
            <person name="Kumar C."/>
            <person name="Mortensen P."/>
            <person name="Mann M."/>
        </authorList>
    </citation>
    <scope>PHOSPHORYLATION [LARGE SCALE ANALYSIS] AT SER-21 AND SER-513</scope>
    <scope>IDENTIFICATION BY MASS SPECTROMETRY [LARGE SCALE ANALYSIS]</scope>
    <source>
        <tissue>Cervix carcinoma</tissue>
    </source>
</reference>
<reference key="16">
    <citation type="journal article" date="2006" name="J. Cell Biol.">
        <title>Stepwise RNP assembly at the site of H/ACA RNA transcription in human cells.</title>
        <authorList>
            <person name="Darzacq X."/>
            <person name="Kittur N."/>
            <person name="Roy S."/>
            <person name="Shav-Tal Y."/>
            <person name="Singer R.H."/>
            <person name="Meier U.T."/>
        </authorList>
    </citation>
    <scope>INTERACTION WITH NAF1</scope>
</reference>
<reference key="17">
    <citation type="journal article" date="2006" name="Nat. Biotechnol.">
        <title>A probability-based approach for high-throughput protein phosphorylation analysis and site localization.</title>
        <authorList>
            <person name="Beausoleil S.A."/>
            <person name="Villen J."/>
            <person name="Gerber S.A."/>
            <person name="Rush J."/>
            <person name="Gygi S.P."/>
        </authorList>
    </citation>
    <scope>PHOSPHORYLATION [LARGE SCALE ANALYSIS] AT SER-494</scope>
    <scope>IDENTIFICATION BY MASS SPECTROMETRY [LARGE SCALE ANALYSIS]</scope>
    <source>
        <tissue>Cervix carcinoma</tissue>
    </source>
</reference>
<reference key="18">
    <citation type="journal article" date="2006" name="RNA">
        <title>hNaf1 is required for accumulation of human box H/ACA snoRNPs, scaRNPs, and telomerase.</title>
        <authorList>
            <person name="Hoareau-Aveilla C."/>
            <person name="Bonoli M."/>
            <person name="Caizergues-Ferrer M."/>
            <person name="Henry Y."/>
        </authorList>
    </citation>
    <scope>INTERACTION WITH NAF1</scope>
</reference>
<reference key="19">
    <citation type="journal article" date="2007" name="Electrophoresis">
        <title>Toward a global characterization of the phosphoproteome in prostate cancer cells: identification of phosphoproteins in the LNCaP cell line.</title>
        <authorList>
            <person name="Giorgianni F."/>
            <person name="Zhao Y."/>
            <person name="Desiderio D.M."/>
            <person name="Beranova-Giorgianni S."/>
        </authorList>
    </citation>
    <scope>IDENTIFICATION BY MASS SPECTROMETRY [LARGE SCALE ANALYSIS]</scope>
    <source>
        <tissue>Prostate cancer</tissue>
    </source>
</reference>
<reference key="20">
    <citation type="journal article" date="2008" name="Mol. Cell">
        <title>Kinase-selective enrichment enables quantitative phosphoproteomics of the kinome across the cell cycle.</title>
        <authorList>
            <person name="Daub H."/>
            <person name="Olsen J.V."/>
            <person name="Bairlein M."/>
            <person name="Gnad F."/>
            <person name="Oppermann F.S."/>
            <person name="Korner R."/>
            <person name="Greff Z."/>
            <person name="Keri G."/>
            <person name="Stemmann O."/>
            <person name="Mann M."/>
        </authorList>
    </citation>
    <scope>PHOSPHORYLATION [LARGE SCALE ANALYSIS] AT SER-21</scope>
    <scope>IDENTIFICATION BY MASS SPECTROMETRY [LARGE SCALE ANALYSIS]</scope>
    <source>
        <tissue>Cervix carcinoma</tissue>
    </source>
</reference>
<reference key="21">
    <citation type="journal article" date="2008" name="Proc. Natl. Acad. Sci. U.S.A.">
        <title>A quantitative atlas of mitotic phosphorylation.</title>
        <authorList>
            <person name="Dephoure N."/>
            <person name="Zhou C."/>
            <person name="Villen J."/>
            <person name="Beausoleil S.A."/>
            <person name="Bakalarski C.E."/>
            <person name="Elledge S.J."/>
            <person name="Gygi S.P."/>
        </authorList>
    </citation>
    <scope>PHOSPHORYLATION [LARGE SCALE ANALYSIS] AT SER-21; SER-485 AND SER-494</scope>
    <scope>IDENTIFICATION BY MASS SPECTROMETRY [LARGE SCALE ANALYSIS]</scope>
    <source>
        <tissue>Cervix carcinoma</tissue>
    </source>
</reference>
<reference key="22">
    <citation type="journal article" date="2008" name="Proteomics">
        <title>Large-scale phosphoproteome analysis of human liver tissue by enrichment and fractionation of phosphopeptides with strong anion exchange chromatography.</title>
        <authorList>
            <person name="Han G."/>
            <person name="Ye M."/>
            <person name="Zhou H."/>
            <person name="Jiang X."/>
            <person name="Feng S."/>
            <person name="Jiang X."/>
            <person name="Tian R."/>
            <person name="Wan D."/>
            <person name="Zou H."/>
            <person name="Gu J."/>
        </authorList>
    </citation>
    <scope>IDENTIFICATION BY MASS SPECTROMETRY [LARGE SCALE ANALYSIS]</scope>
    <source>
        <tissue>Liver</tissue>
    </source>
</reference>
<reference key="23">
    <citation type="journal article" date="2009" name="Anal. Chem.">
        <title>Lys-N and trypsin cover complementary parts of the phosphoproteome in a refined SCX-based approach.</title>
        <authorList>
            <person name="Gauci S."/>
            <person name="Helbig A.O."/>
            <person name="Slijper M."/>
            <person name="Krijgsveld J."/>
            <person name="Heck A.J."/>
            <person name="Mohammed S."/>
        </authorList>
    </citation>
    <scope>ACETYLATION [LARGE SCALE ANALYSIS] AT ALA-2</scope>
    <scope>CLEAVAGE OF INITIATOR METHIONINE [LARGE SCALE ANALYSIS]</scope>
    <scope>IDENTIFICATION BY MASS SPECTROMETRY [LARGE SCALE ANALYSIS]</scope>
</reference>
<reference key="24">
    <citation type="journal article" date="2009" name="Hum. Mol. Genet.">
        <title>Pathogenic NAP57 mutations decrease ribonucleoprotein assembly in dyskeratosis congenita.</title>
        <authorList>
            <person name="Grozdanov P.N."/>
            <person name="Fernandez-Fuentes N."/>
            <person name="Fiser A."/>
            <person name="Meier U.T."/>
        </authorList>
    </citation>
    <scope>INTERACTION WITH SHQ1</scope>
    <scope>CHARACTERIZATION OF VARIANTS DKCX ALA-66; ILE-350; THR-350 AND VAL-353</scope>
    <scope>CHARACTERIZATION OF VARIANTS HHS MET-49 AND GLY-121</scope>
    <scope>MUTAGENESIS OF ALA-353</scope>
</reference>
<reference key="25">
    <citation type="journal article" date="2009" name="Mol. Cell. Proteomics">
        <title>Large-scale proteomics analysis of the human kinome.</title>
        <authorList>
            <person name="Oppermann F.S."/>
            <person name="Gnad F."/>
            <person name="Olsen J.V."/>
            <person name="Hornberger R."/>
            <person name="Greff Z."/>
            <person name="Keri G."/>
            <person name="Mann M."/>
            <person name="Daub H."/>
        </authorList>
    </citation>
    <scope>PHOSPHORYLATION [LARGE SCALE ANALYSIS] AT SER-513</scope>
    <scope>IDENTIFICATION BY MASS SPECTROMETRY [LARGE SCALE ANALYSIS]</scope>
</reference>
<reference key="26">
    <citation type="journal article" date="2009" name="RNA">
        <title>SHQ1 is required prior to NAF1 for assembly of H/ACA small nucleolar and telomerase RNPs.</title>
        <authorList>
            <person name="Grozdanov P.N."/>
            <person name="Roy S."/>
            <person name="Kittur N."/>
            <person name="Meier U.T."/>
        </authorList>
    </citation>
    <scope>INTERACTION WITH SHQ1</scope>
</reference>
<reference key="27">
    <citation type="journal article" date="2009" name="Sci. Signal.">
        <title>Quantitative phosphoproteomic analysis of T cell receptor signaling reveals system-wide modulation of protein-protein interactions.</title>
        <authorList>
            <person name="Mayya V."/>
            <person name="Lundgren D.H."/>
            <person name="Hwang S.-I."/>
            <person name="Rezaul K."/>
            <person name="Wu L."/>
            <person name="Eng J.K."/>
            <person name="Rodionov V."/>
            <person name="Han D.K."/>
        </authorList>
    </citation>
    <scope>PHOSPHORYLATION [LARGE SCALE ANALYSIS] AT SER-21; SER-485 AND SER-494</scope>
    <scope>IDENTIFICATION BY MASS SPECTROMETRY [LARGE SCALE ANALYSIS]</scope>
    <source>
        <tissue>Leukemic T-cell</tissue>
    </source>
</reference>
<reference key="28">
    <citation type="journal article" date="2009" name="Science">
        <title>A human telomerase holoenzyme protein required for Cajal body localization and telomere synthesis.</title>
        <authorList>
            <person name="Venteicher A.S."/>
            <person name="Abreu E.B."/>
            <person name="Meng Z."/>
            <person name="McCann K.E."/>
            <person name="Terns R.M."/>
            <person name="Veenstra T.D."/>
            <person name="Terns M.P."/>
            <person name="Artandi S.E."/>
        </authorList>
    </citation>
    <scope>IDENTIFICATION IN THE TELOMERASE HOLOENZYME COMPLEX</scope>
    <scope>FUNCTION</scope>
</reference>
<reference key="29">
    <citation type="journal article" date="2010" name="Mol. Cell. Biol.">
        <title>Specificity and stoichiometry of subunit interactions in the human telomerase holoenzyme assembled in vivo.</title>
        <authorList>
            <person name="Egan E.D."/>
            <person name="Collins K."/>
        </authorList>
    </citation>
    <scope>IDENTIFICATION IN THE TELOMERASE HOLOENZYME COMPLEX</scope>
</reference>
<reference key="30">
    <citation type="journal article" date="1999" name="Br. J. Haematol.">
        <title>Unexplained aplastic anaemia, immunodeficiency, and cerebellar hypoplasia (Hoyeraal-Hreidarsson syndrome) due to mutations in the dyskeratosis congenita gene, DKC1.</title>
        <authorList>
            <person name="Knight S.W."/>
            <person name="Heiss N.S."/>
            <person name="Vulliamy T.J."/>
            <person name="Aalfs C.M."/>
            <person name="McMahon C."/>
            <person name="Richmond P."/>
            <person name="Jones A."/>
            <person name="Hennekam R.C.M."/>
            <person name="Poustka A."/>
            <person name="Mason P.J."/>
            <person name="Dokal I."/>
        </authorList>
    </citation>
    <scope>INVOLVEMENT IN HHS</scope>
    <scope>VARIANTS HHS MET-49 AND GLY-121</scope>
</reference>
<reference key="31">
    <citation type="journal article" date="2010" name="Sci. Signal.">
        <title>Quantitative phosphoproteomics reveals widespread full phosphorylation site occupancy during mitosis.</title>
        <authorList>
            <person name="Olsen J.V."/>
            <person name="Vermeulen M."/>
            <person name="Santamaria A."/>
            <person name="Kumar C."/>
            <person name="Miller M.L."/>
            <person name="Jensen L.J."/>
            <person name="Gnad F."/>
            <person name="Cox J."/>
            <person name="Jensen T.S."/>
            <person name="Nigg E.A."/>
            <person name="Brunak S."/>
            <person name="Mann M."/>
        </authorList>
    </citation>
    <scope>PHOSPHORYLATION [LARGE SCALE ANALYSIS] AT SER-21; SER-451; SER-453; SER-485; SER-494 AND SER-513</scope>
    <scope>IDENTIFICATION BY MASS SPECTROMETRY [LARGE SCALE ANALYSIS]</scope>
    <source>
        <tissue>Cervix carcinoma</tissue>
    </source>
</reference>
<reference key="32">
    <citation type="journal article" date="2011" name="BMC Syst. Biol.">
        <title>Initial characterization of the human central proteome.</title>
        <authorList>
            <person name="Burkard T.R."/>
            <person name="Planyavsky M."/>
            <person name="Kaupe I."/>
            <person name="Breitwieser F.P."/>
            <person name="Buerckstuemmer T."/>
            <person name="Bennett K.L."/>
            <person name="Superti-Furga G."/>
            <person name="Colinge J."/>
        </authorList>
    </citation>
    <scope>IDENTIFICATION BY MASS SPECTROMETRY [LARGE SCALE ANALYSIS]</scope>
</reference>
<reference key="33">
    <citation type="journal article" date="2011" name="Nucleic Acids Res.">
        <title>The DEAH-box RNA helicase RHAU binds an intramolecular RNA G-quadruplex in TERC and associates with telomerase holoenzyme.</title>
        <authorList>
            <person name="Lattmann S."/>
            <person name="Stadler M.B."/>
            <person name="Vaughn J.P."/>
            <person name="Akman S.A."/>
            <person name="Nagamine Y."/>
        </authorList>
    </citation>
    <scope>INTERACTION WITH DHX36</scope>
</reference>
<reference key="34">
    <citation type="journal article" date="2011" name="Sci. Signal.">
        <title>System-wide temporal characterization of the proteome and phosphoproteome of human embryonic stem cell differentiation.</title>
        <authorList>
            <person name="Rigbolt K.T."/>
            <person name="Prokhorova T.A."/>
            <person name="Akimov V."/>
            <person name="Henningsen J."/>
            <person name="Johansen P.T."/>
            <person name="Kratchmarova I."/>
            <person name="Kassem M."/>
            <person name="Mann M."/>
            <person name="Olsen J.V."/>
            <person name="Blagoev B."/>
        </authorList>
    </citation>
    <scope>PHOSPHORYLATION [LARGE SCALE ANALYSIS] AT SER-21; SER-451; SER-453; SER-455; SER-485; SER-494 AND SER-513</scope>
    <scope>IDENTIFICATION BY MASS SPECTROMETRY [LARGE SCALE ANALYSIS]</scope>
</reference>
<reference key="35">
    <citation type="journal article" date="2012" name="Mol. Cell. Proteomics">
        <title>Comparative large-scale characterisation of plant vs. mammal proteins reveals similar and idiosyncratic N-alpha acetylation features.</title>
        <authorList>
            <person name="Bienvenut W.V."/>
            <person name="Sumpton D."/>
            <person name="Martinez A."/>
            <person name="Lilla S."/>
            <person name="Espagne C."/>
            <person name="Meinnel T."/>
            <person name="Giglione C."/>
        </authorList>
    </citation>
    <scope>ACETYLATION [LARGE SCALE ANALYSIS] AT ALA-2</scope>
    <scope>CLEAVAGE OF INITIATOR METHIONINE [LARGE SCALE ANALYSIS]</scope>
    <scope>IDENTIFICATION BY MASS SPECTROMETRY [LARGE SCALE ANALYSIS]</scope>
</reference>
<reference key="36">
    <citation type="journal article" date="2013" name="EMBO J.">
        <title>HOT1 is a mammalian direct telomere repeat-binding protein contributing to telomerase recruitment.</title>
        <authorList>
            <person name="Kappei D."/>
            <person name="Butter F."/>
            <person name="Benda C."/>
            <person name="Scheibe M."/>
            <person name="Draskovic I."/>
            <person name="Stevense M."/>
            <person name="Novo C.L."/>
            <person name="Basquin C."/>
            <person name="Araki M."/>
            <person name="Araki K."/>
            <person name="Krastev D.B."/>
            <person name="Kittler R."/>
            <person name="Jessberger R."/>
            <person name="Londono-Vallejo J.A."/>
            <person name="Mann M."/>
            <person name="Buchholz F."/>
        </authorList>
    </citation>
    <scope>INTERACTION WITH HMBOX1</scope>
</reference>
<reference key="37">
    <citation type="journal article" date="2013" name="J. Proteome Res.">
        <title>Toward a comprehensive characterization of a human cancer cell phosphoproteome.</title>
        <authorList>
            <person name="Zhou H."/>
            <person name="Di Palma S."/>
            <person name="Preisinger C."/>
            <person name="Peng M."/>
            <person name="Polat A.N."/>
            <person name="Heck A.J."/>
            <person name="Mohammed S."/>
        </authorList>
    </citation>
    <scope>PHOSPHORYLATION [LARGE SCALE ANALYSIS] AT SER-387; SER-451; SER-453; SER-485; SER-494 AND SER-513</scope>
    <scope>IDENTIFICATION BY MASS SPECTROMETRY [LARGE SCALE ANALYSIS]</scope>
    <source>
        <tissue>Cervix carcinoma</tissue>
        <tissue>Erythroleukemia</tissue>
    </source>
</reference>
<reference key="38">
    <citation type="journal article" date="2014" name="Cell">
        <title>Transcriptome-wide mapping reveals widespread dynamic-regulated pseudouridylation of ncRNA and mRNA.</title>
        <authorList>
            <person name="Schwartz S."/>
            <person name="Bernstein D.A."/>
            <person name="Mumbach M.R."/>
            <person name="Jovanovic M."/>
            <person name="Herbst R.H."/>
            <person name="Leon-Ricardo B.X."/>
            <person name="Engreitz J.M."/>
            <person name="Guttman M."/>
            <person name="Satija R."/>
            <person name="Lander E.S."/>
            <person name="Fink G."/>
            <person name="Regev A."/>
        </authorList>
    </citation>
    <scope>FUNCTION</scope>
    <scope>CATALYTIC ACTIVITY</scope>
    <scope>INVOLVEMENT IN DKCX</scope>
</reference>
<reference key="39">
    <citation type="journal article" date="2014" name="J. Proteomics">
        <title>An enzyme assisted RP-RPLC approach for in-depth analysis of human liver phosphoproteome.</title>
        <authorList>
            <person name="Bian Y."/>
            <person name="Song C."/>
            <person name="Cheng K."/>
            <person name="Dong M."/>
            <person name="Wang F."/>
            <person name="Huang J."/>
            <person name="Sun D."/>
            <person name="Wang L."/>
            <person name="Ye M."/>
            <person name="Zou H."/>
        </authorList>
    </citation>
    <scope>PHOSPHORYLATION [LARGE SCALE ANALYSIS] AT SER-494</scope>
    <scope>IDENTIFICATION BY MASS SPECTROMETRY [LARGE SCALE ANALYSIS]</scope>
    <source>
        <tissue>Liver</tissue>
    </source>
</reference>
<reference key="40">
    <citation type="journal article" date="2014" name="Nat. Struct. Mol. Biol.">
        <title>Uncovering global SUMOylation signaling networks in a site-specific manner.</title>
        <authorList>
            <person name="Hendriks I.A."/>
            <person name="D'Souza R.C."/>
            <person name="Yang B."/>
            <person name="Verlaan-de Vries M."/>
            <person name="Mann M."/>
            <person name="Vertegaal A.C."/>
        </authorList>
    </citation>
    <scope>SUMOYLATION [LARGE SCALE ANALYSIS] AT LYS-413</scope>
    <scope>IDENTIFICATION BY MASS SPECTROMETRY [LARGE SCALE ANALYSIS]</scope>
</reference>
<reference key="41">
    <citation type="journal article" date="2014" name="Proc. Natl. Acad. Sci. U.S.A.">
        <title>Mapping of SUMO sites and analysis of SUMOylation changes induced by external stimuli.</title>
        <authorList>
            <person name="Impens F."/>
            <person name="Radoshevich L."/>
            <person name="Cossart P."/>
            <person name="Ribet D."/>
        </authorList>
    </citation>
    <scope>SUMOYLATION [LARGE SCALE ANALYSIS] AT LYS-413</scope>
    <scope>IDENTIFICATION BY MASS SPECTROMETRY [LARGE SCALE ANALYSIS]</scope>
</reference>
<reference key="42">
    <citation type="journal article" date="2015" name="Cell Rep.">
        <title>SUMO-2 orchestrates chromatin modifiers in response to DNA damage.</title>
        <authorList>
            <person name="Hendriks I.A."/>
            <person name="Treffers L.W."/>
            <person name="Verlaan-de Vries M."/>
            <person name="Olsen J.V."/>
            <person name="Vertegaal A.C."/>
        </authorList>
    </citation>
    <scope>SUMOYLATION [LARGE SCALE ANALYSIS] AT LYS-413</scope>
    <scope>IDENTIFICATION BY MASS SPECTROMETRY [LARGE SCALE ANALYSIS]</scope>
</reference>
<reference key="43">
    <citation type="journal article" date="2015" name="Mol. Cell. Proteomics">
        <title>System-wide analysis of SUMOylation dynamics in response to replication stress reveals novel small ubiquitin-like modified target proteins and acceptor lysines relevant for genome stability.</title>
        <authorList>
            <person name="Xiao Z."/>
            <person name="Chang J.G."/>
            <person name="Hendriks I.A."/>
            <person name="Sigurdsson J.O."/>
            <person name="Olsen J.V."/>
            <person name="Vertegaal A.C."/>
        </authorList>
    </citation>
    <scope>SUMOYLATION [LARGE SCALE ANALYSIS] AT LYS-413</scope>
    <scope>IDENTIFICATION BY MASS SPECTROMETRY [LARGE SCALE ANALYSIS]</scope>
</reference>
<reference key="44">
    <citation type="journal article" date="2017" name="Nat. Struct. Mol. Biol.">
        <title>Site-specific mapping of the human SUMO proteome reveals co-modification with phosphorylation.</title>
        <authorList>
            <person name="Hendriks I.A."/>
            <person name="Lyon D."/>
            <person name="Young C."/>
            <person name="Jensen L.J."/>
            <person name="Vertegaal A.C."/>
            <person name="Nielsen M.L."/>
        </authorList>
    </citation>
    <scope>SUMOYLATION [LARGE SCALE ANALYSIS] AT LYS-20; LYS-39; LYS-43; LYS-191; LYS-394; LYS-413; LYS-424; LYS-433 AND LYS-467</scope>
    <scope>IDENTIFICATION BY MASS SPECTROMETRY [LARGE SCALE ANALYSIS]</scope>
</reference>
<reference key="45">
    <citation type="journal article" date="2018" name="Nature">
        <title>Cryo-EM structure of substrate-bound human telomerase holoenzyme.</title>
        <authorList>
            <person name="Nguyen T.H.D."/>
            <person name="Tam J."/>
            <person name="Wu R.A."/>
            <person name="Greber B.J."/>
            <person name="Toso D."/>
            <person name="Nogales E."/>
            <person name="Collins K."/>
        </authorList>
    </citation>
    <scope>STRUCTURE BY ELECTRON MICROSCOPY (7.7 ANGSTROMS) OF THE TELOMERASE HOLOENZYME COMPLEX</scope>
</reference>
<reference key="46">
    <citation type="journal article" date="2002" name="Br. J. Haematol.">
        <title>A novel DKC1 mutation, severe combined immunodeficiency (T+B-NK-SCID) and bone marrow transplantation in an infant with Hoyeraal-Hreidarsson syndrome.</title>
        <authorList>
            <person name="Cossu F."/>
            <person name="Vulliamy T.J."/>
            <person name="Marrone A."/>
            <person name="Badiali M."/>
            <person name="Cao A."/>
            <person name="Dokal I."/>
        </authorList>
    </citation>
    <scope>VARIANT HHS THR-38</scope>
</reference>
<reference key="47">
    <citation type="journal article" date="2004" name="J. Invest. Dermatol.">
        <title>Identification of a novel mutation and a de novo mutation in DKC1 in two Chinese pedigrees with Dyskeratosis congenita.</title>
        <authorList>
            <person name="Ding Y.G."/>
            <person name="Zhu T.S."/>
            <person name="Jiang W."/>
            <person name="Yang Y."/>
            <person name="Bu D.F."/>
            <person name="Tu P."/>
            <person name="Zhu X.J."/>
            <person name="Wang B.X."/>
        </authorList>
    </citation>
    <scope>VARIANTS DKCX VAL-353 AND LEU-409</scope>
</reference>
<reference key="48">
    <citation type="journal article" date="2008" name="Pediatr. Blood Cancer">
        <title>X-linked dyskeratosis congenita in Malaysia.</title>
        <authorList>
            <person name="Hamidah A."/>
            <person name="Rashid R.A."/>
            <person name="Jamal R."/>
            <person name="Zhao M."/>
            <person name="Kanegane H."/>
        </authorList>
    </citation>
    <scope>VARIANT DKCX PHE-72</scope>
</reference>
<reference key="49">
    <citation type="journal article" date="2009" name="Pediatr. Blood Cancer">
        <title>Identification of a novel mutation in DKC1 in dyskeratosis congenita.</title>
        <authorList>
            <person name="Kurnikova M."/>
            <person name="Shagina I."/>
            <person name="Khachatryan L."/>
            <person name="Schagina O."/>
            <person name="Maschan M."/>
            <person name="Shagin D."/>
        </authorList>
    </citation>
    <scope>VARIANT DKCX SER-56</scope>
</reference>
<reference key="50">
    <citation type="journal article" date="2010" name="Blood Cells Mol. Dis.">
        <title>Novel mutations of the DKC1 gene in individuals affected with dyskeratosis congenita.</title>
        <authorList>
            <person name="Rostamiani K."/>
            <person name="Klauck S.M."/>
            <person name="Heiss N."/>
            <person name="Poustka A."/>
            <person name="Khaleghi M."/>
            <person name="Rosales R."/>
            <person name="Metzenberg A.B."/>
        </authorList>
    </citation>
    <scope>VARIANTS DKCX PHE-317 AND GLN-322</scope>
</reference>
<reference key="51">
    <citation type="journal article" date="2011" name="Nature">
        <title>Telomere shortening and loss of self-renewal in dyskeratosis congenita induced pluripotent stem cells.</title>
        <authorList>
            <person name="Batista L.F."/>
            <person name="Pech M.F."/>
            <person name="Zhong F.L."/>
            <person name="Nguyen H.N."/>
            <person name="Xie K.T."/>
            <person name="Zaug A.J."/>
            <person name="Crary S.M."/>
            <person name="Choi J."/>
            <person name="Sebastiano V."/>
            <person name="Cherry A."/>
            <person name="Giri N."/>
            <person name="Wernig M."/>
            <person name="Alter B.P."/>
            <person name="Cech T.R."/>
            <person name="Savage S.A."/>
            <person name="Reijo Pera R.A."/>
            <person name="Artandi S.E."/>
        </authorList>
    </citation>
    <scope>VARIANTS DKCX LEU-37 DEL AND VAL-54</scope>
    <scope>CHARACTERIZATION OF VARIANTS DKCX LEU-37 DEL AND VAL-54</scope>
</reference>
<reference key="52">
    <citation type="journal article" date="2014" name="Gene">
        <title>Hoyeraal-Hreidarsson syndrome with a DKC1 mutation identified by whole-exome sequencing.</title>
        <authorList>
            <person name="Lim B.C."/>
            <person name="Yoo S.K."/>
            <person name="Lee S."/>
            <person name="Shin J.Y."/>
            <person name="Hwang H."/>
            <person name="Chae J.H."/>
            <person name="Hwang Y.S."/>
            <person name="Seo J.S."/>
            <person name="Kim J.I."/>
            <person name="Kim K.J."/>
        </authorList>
    </citation>
    <scope>VARIANT HHS MET-49</scope>
</reference>
<reference key="53">
    <citation type="journal article" date="2020" name="Proc. Natl. Acad. Sci. U.S.A.">
        <title>Pseudouridylation defect due to DKC1 and NOP10 mutations causes nephrotic syndrome with cataracts, hearing impairment, and enterocolitis.</title>
        <authorList>
            <person name="Balogh E."/>
            <person name="Chandler J.C."/>
            <person name="Varga M."/>
            <person name="Tahoun M."/>
            <person name="Menyhard D.K."/>
            <person name="Schay G."/>
            <person name="Goncalves T."/>
            <person name="Hamar R."/>
            <person name="Legradi R."/>
            <person name="Szekeres A."/>
            <person name="Gribouval O."/>
            <person name="Kleta R."/>
            <person name="Stanescu H."/>
            <person name="Bockenhauer D."/>
            <person name="Kerti A."/>
            <person name="Williams H."/>
            <person name="Kinsler V."/>
            <person name="Di W.L."/>
            <person name="Curtis D."/>
            <person name="Kolatsi-Joannou M."/>
            <person name="Hammid H."/>
            <person name="Szocs A."/>
            <person name="Perczel K."/>
            <person name="Maka E."/>
            <person name="Toldi G."/>
            <person name="Sava F."/>
            <person name="Arrondel C."/>
            <person name="Kardos M."/>
            <person name="Fintha A."/>
            <person name="Hossain A."/>
            <person name="D'Arco F."/>
            <person name="Kaliakatsos M."/>
            <person name="Koeglmeier J."/>
            <person name="Mifsud W."/>
            <person name="Moosajee M."/>
            <person name="Faro A."/>
            <person name="Javorszky E."/>
            <person name="Rudas G."/>
            <person name="Saied M.H."/>
            <person name="Marzouk S."/>
            <person name="Kelen K."/>
            <person name="Goetze J."/>
            <person name="Reusz G."/>
            <person name="Tulassay T."/>
            <person name="Dragon F."/>
            <person name="Mollet G."/>
            <person name="Motameny S."/>
            <person name="Thiele H."/>
            <person name="Dorval G."/>
            <person name="Nuernberg P."/>
            <person name="Perczel A."/>
            <person name="Szabo A.J."/>
            <person name="Long D.A."/>
            <person name="Tomita K."/>
            <person name="Antignac C."/>
            <person name="Waters A.M."/>
            <person name="Tory K."/>
        </authorList>
    </citation>
    <scope>VARIANT CHINE1 LYS-206</scope>
    <scope>INVOLVEMENT IN CHINE1</scope>
    <scope>CHARACTERIZATION OF VARIANT CHINE1 LYS-206</scope>
    <scope>FUNCTION</scope>
</reference>